<keyword id="KW-0002">3D-structure</keyword>
<keyword id="KW-0025">Alternative splicing</keyword>
<keyword id="KW-1003">Cell membrane</keyword>
<keyword id="KW-0903">Direct protein sequencing</keyword>
<keyword id="KW-0225">Disease variant</keyword>
<keyword id="KW-1015">Disulfide bond</keyword>
<keyword id="KW-0325">Glycoprotein</keyword>
<keyword id="KW-0945">Host-virus interaction</keyword>
<keyword id="KW-0393">Immunoglobulin domain</keyword>
<keyword id="KW-0472">Membrane</keyword>
<keyword id="KW-0597">Phosphoprotein</keyword>
<keyword id="KW-1267">Proteomics identification</keyword>
<keyword id="KW-0675">Receptor</keyword>
<keyword id="KW-1185">Reference proteome</keyword>
<keyword id="KW-0677">Repeat</keyword>
<keyword id="KW-0964">Secreted</keyword>
<keyword id="KW-0732">Signal</keyword>
<keyword id="KW-0812">Transmembrane</keyword>
<keyword id="KW-1133">Transmembrane helix</keyword>
<feature type="signal peptide">
    <location>
        <begin position="1"/>
        <end position="22"/>
    </location>
</feature>
<feature type="chain" id="PRO_0000010899" description="Interleukin-6 receptor subunit beta">
    <location>
        <begin position="23"/>
        <end position="918"/>
    </location>
</feature>
<feature type="topological domain" description="Extracellular" evidence="2">
    <location>
        <begin position="23"/>
        <end position="619"/>
    </location>
</feature>
<feature type="transmembrane region" description="Helical" evidence="2">
    <location>
        <begin position="620"/>
        <end position="641"/>
    </location>
</feature>
<feature type="topological domain" description="Cytoplasmic" evidence="2">
    <location>
        <begin position="642"/>
        <end position="918"/>
    </location>
</feature>
<feature type="domain" description="Ig-like C2-type">
    <location>
        <begin position="26"/>
        <end position="120"/>
    </location>
</feature>
<feature type="domain" description="Fibronectin type-III 1" evidence="3">
    <location>
        <begin position="125"/>
        <end position="216"/>
    </location>
</feature>
<feature type="domain" description="Fibronectin type-III 2" evidence="3">
    <location>
        <begin position="224"/>
        <end position="324"/>
    </location>
</feature>
<feature type="domain" description="Fibronectin type-III 3" evidence="3">
    <location>
        <begin position="329"/>
        <end position="424"/>
    </location>
</feature>
<feature type="domain" description="Fibronectin type-III 4" evidence="3">
    <location>
        <begin position="426"/>
        <end position="517"/>
    </location>
</feature>
<feature type="domain" description="Fibronectin type-III 5" evidence="3">
    <location>
        <begin position="518"/>
        <end position="613"/>
    </location>
</feature>
<feature type="region of interest" description="Disordered" evidence="4">
    <location>
        <begin position="660"/>
        <end position="681"/>
    </location>
</feature>
<feature type="region of interest" description="Disordered" evidence="4">
    <location>
        <begin position="722"/>
        <end position="758"/>
    </location>
</feature>
<feature type="short sequence motif" description="WSXWS motif">
    <location>
        <begin position="310"/>
        <end position="314"/>
    </location>
</feature>
<feature type="short sequence motif" description="Box 1 motif">
    <location>
        <begin position="651"/>
        <end position="659"/>
    </location>
</feature>
<feature type="compositionally biased region" description="Low complexity" evidence="4">
    <location>
        <begin position="731"/>
        <end position="755"/>
    </location>
</feature>
<feature type="modified residue" description="Phosphoserine" evidence="47">
    <location>
        <position position="661"/>
    </location>
</feature>
<feature type="modified residue" description="Phosphoserine" evidence="44 45 46 47">
    <location>
        <position position="667"/>
    </location>
</feature>
<feature type="modified residue" description="Phosphoserine" evidence="5">
    <location>
        <position position="782"/>
    </location>
</feature>
<feature type="modified residue" description="Phosphoserine" evidence="1">
    <location>
        <position position="789"/>
    </location>
</feature>
<feature type="modified residue" description="Phosphoserine" evidence="43">
    <location>
        <position position="829"/>
    </location>
</feature>
<feature type="modified residue" description="Phosphoserine" evidence="46">
    <location>
        <position position="839"/>
    </location>
</feature>
<feature type="glycosylation site" description="N-linked (GlcNAc...) asparagine" evidence="7 19">
    <location>
        <position position="43"/>
    </location>
</feature>
<feature type="glycosylation site" description="N-linked (GlcNAc...) asparagine" evidence="7 19">
    <location>
        <position position="83"/>
    </location>
</feature>
<feature type="glycosylation site" description="N-linked (GlcNAc...) asparagine" evidence="7">
    <location>
        <position position="131"/>
    </location>
</feature>
<feature type="glycosylation site" description="N-linked (GlcNAc...) asparagine" evidence="7">
    <location>
        <position position="157"/>
    </location>
</feature>
<feature type="glycosylation site" description="N-linked (GlcNAc...) asparagine" evidence="7 16 19">
    <location>
        <position position="227"/>
    </location>
</feature>
<feature type="glycosylation site" description="N-linked (GlcNAc...) asparagine" evidence="7 13">
    <location>
        <position position="379"/>
    </location>
</feature>
<feature type="glycosylation site" description="N-linked (GlcNAc...) asparagine" evidence="7 13 19">
    <location>
        <position position="383"/>
    </location>
</feature>
<feature type="glycosylation site" description="N-linked (GlcNAc...) (complex) asparagine" evidence="15 16">
    <location>
        <position position="390"/>
    </location>
</feature>
<feature type="glycosylation site" description="N-linked (GlcNAc...) asparagine" evidence="7 19">
    <location>
        <position position="553"/>
    </location>
</feature>
<feature type="glycosylation site" description="N-linked (GlcNAc...) asparagine" evidence="7">
    <location>
        <position position="564"/>
    </location>
</feature>
<feature type="disulfide bond" evidence="7 19">
    <location>
        <begin position="28"/>
        <end position="54"/>
    </location>
</feature>
<feature type="disulfide bond" evidence="7 19">
    <location>
        <begin position="48"/>
        <end position="103"/>
    </location>
</feature>
<feature type="disulfide bond" evidence="7 19">
    <location>
        <begin position="134"/>
        <end position="144"/>
    </location>
</feature>
<feature type="disulfide bond" evidence="7 19">
    <location>
        <begin position="172"/>
        <end position="182"/>
    </location>
</feature>
<feature type="disulfide bond" evidence="7 19">
    <location>
        <begin position="458"/>
        <end position="466"/>
    </location>
</feature>
<feature type="splice variant" id="VSP_001684" description="In isoform 2." evidence="37">
    <original>RPSKA</original>
    <variation>NIASF</variation>
    <location>
        <begin position="325"/>
        <end position="329"/>
    </location>
</feature>
<feature type="splice variant" id="VSP_001685" description="In isoform 2." evidence="37">
    <location>
        <begin position="330"/>
        <end position="918"/>
    </location>
</feature>
<feature type="splice variant" id="VSP_043716" description="In isoform 3." evidence="39">
    <location>
        <begin position="423"/>
        <end position="483"/>
    </location>
</feature>
<feature type="sequence variant" id="VAR_047782" description="In dbSNP:rs1063560." evidence="6 21">
    <original>L</original>
    <variation>V</variation>
    <location>
        <position position="8"/>
    </location>
</feature>
<feature type="sequence variant" id="VAR_047783" description="Correlated with increased levels of soluble IL6RB in blood serum; dbSNP:rs2228044." evidence="23">
    <original>G</original>
    <variation>R</variation>
    <location>
        <position position="148"/>
    </location>
</feature>
<feature type="sequence variant" id="VAR_086950" description="In IMD94; results in constitutively active IL6-mediated signaling and constitutive phosphorylation of STAT3 in patient cells." evidence="33">
    <location>
        <begin position="187"/>
        <end position="190"/>
    </location>
</feature>
<feature type="sequence variant" id="VAR_074654" description="Found in patient with lung cancer; uncertain significance; dbSNP:rs199905033." evidence="24">
    <original>A</original>
    <variation>G</variation>
    <location>
        <position position="200"/>
    </location>
</feature>
<feature type="sequence variant" id="VAR_086951" description="In STWS2; results in impaired cytokine-mediated signaling pathway with loss of response to IL-6, IL-11, IL-27, OSM and LIF; does not localize to the cell membrane." evidence="31">
    <location>
        <begin position="281"/>
        <end position="918"/>
    </location>
</feature>
<feature type="sequence variant" id="VAR_047784" description="In dbSNP:rs2228043.">
    <original>L</original>
    <variation>V</variation>
    <location>
        <position position="397"/>
    </location>
</feature>
<feature type="sequence variant" id="VAR_083197" description="In HIES4B; results in defective cytokine-mediated signaling pathway with loss of response to IL-6, IL-11, IL-27, OSM but not LIF." evidence="28">
    <original>N</original>
    <variation>Y</variation>
    <location>
        <position position="404"/>
    </location>
</feature>
<feature type="sequence variant" id="VAR_036165" description="In a colorectal cancer sample; somatic mutation." evidence="14">
    <original>T</original>
    <variation>I</variation>
    <location>
        <position position="415"/>
    </location>
</feature>
<feature type="sequence variant" id="VAR_047785" description="In dbSNP:rs2228046.">
    <original>I</original>
    <variation>T</variation>
    <location>
        <position position="454"/>
    </location>
</feature>
<feature type="sequence variant" id="VAR_083198" description="In HIES4B; results in defective cytokine-mediated signaling pathway." evidence="30">
    <original>P</original>
    <variation>L</variation>
    <location>
        <position position="498"/>
    </location>
</feature>
<feature type="sequence variant" id="VAR_047786" description="In dbSNP:rs34417936.">
    <original>V</original>
    <variation>I</variation>
    <location>
        <position position="499"/>
    </location>
</feature>
<feature type="sequence variant" id="VAR_086952" description="In HIES4B; results in impaired cytokine-mediated signaling pathway with loss of response to IL-6, IL-11, IL-27 and reduced response to OSM, CNTF and LIF." evidence="34">
    <original>A</original>
    <variation>P</variation>
    <location>
        <position position="517"/>
    </location>
</feature>
<feature type="sequence variant" id="VAR_086953" description="In HIES4A; results in impaired cytokine-mediated signaling pathway with loss of response to IL-6, IL-11, OSM and LIF and a weak response to IL-27." evidence="32">
    <location>
        <begin position="733"/>
        <end position="918"/>
    </location>
</feature>
<feature type="sequence variant" id="VAR_086954" description="In HIES4A; results in impaired cytokine-mediated signaling pathway with loss of response to IL-6, IL-11, OSM and LIF and a weak response to IL-27." evidence="32">
    <location>
        <begin position="754"/>
        <end position="918"/>
    </location>
</feature>
<feature type="sequence variant" id="VAR_086955" description="In HIES4A; results in impaired cytokine-mediated signaling pathway with loss of response to IL-6, IL-11, OSM, LIF and a weak response to IL-27." evidence="32">
    <location>
        <begin position="759"/>
        <end position="918"/>
    </location>
</feature>
<feature type="mutagenesis site" description="Induces ligand-independent activation." evidence="22">
    <original>C</original>
    <variation>S</variation>
    <location>
        <position position="172"/>
    </location>
</feature>
<feature type="mutagenesis site" description="Induces ligand-independent activation." evidence="22">
    <location>
        <begin position="186"/>
        <end position="190"/>
    </location>
</feature>
<feature type="mutagenesis site" description="Does not induce ligand-independent activation." evidence="22">
    <original>V</original>
    <variation>G</variation>
    <location>
        <position position="189"/>
    </location>
</feature>
<feature type="mutagenesis site" description="Does not induce ligand-independent activation." evidence="22">
    <original>Y</original>
    <variation>G</variation>
    <location>
        <position position="190"/>
    </location>
</feature>
<feature type="mutagenesis site" description="Induces ligand-independent activation." evidence="22">
    <original>D</original>
    <variation>G</variation>
    <location>
        <position position="215"/>
    </location>
</feature>
<feature type="mutagenesis site" description="Induces ligand-independent activation." evidence="22">
    <original>V</original>
    <variation>G</variation>
    <location>
        <position position="252"/>
    </location>
</feature>
<feature type="mutagenesis site" description="Refractory to inhibition by SOCS3." evidence="25">
    <original>Y</original>
    <variation>F</variation>
    <location>
        <position position="759"/>
    </location>
</feature>
<feature type="mutagenesis site" description="Increases cell surface expression." evidence="5">
    <original>S</original>
    <variation>A</variation>
    <location>
        <position position="782"/>
    </location>
</feature>
<feature type="mutagenesis site" description="Results in impaired cytokine-mediated signaling pathway with loss of response to IL-6 and IL-11. Weak response to IL-27, OSM and LIF." evidence="32">
    <location>
        <begin position="789"/>
        <end position="918"/>
    </location>
</feature>
<feature type="mutagenesis site" description="Results in impaired cytokine-mediated signaling pathway with loss of response to IL-6 and IL-11. Weak response to IL-27, OSM and LIF." evidence="32">
    <location>
        <begin position="899"/>
        <end position="918"/>
    </location>
</feature>
<feature type="strand" evidence="49">
    <location>
        <begin position="28"/>
        <end position="35"/>
    </location>
</feature>
<feature type="strand" evidence="49">
    <location>
        <begin position="37"/>
        <end position="39"/>
    </location>
</feature>
<feature type="strand" evidence="49">
    <location>
        <begin position="44"/>
        <end position="50"/>
    </location>
</feature>
<feature type="helix" evidence="49">
    <location>
        <begin position="52"/>
        <end position="58"/>
    </location>
</feature>
<feature type="helix" evidence="49">
    <location>
        <begin position="62"/>
        <end position="64"/>
    </location>
</feature>
<feature type="strand" evidence="49">
    <location>
        <begin position="65"/>
        <end position="69"/>
    </location>
</feature>
<feature type="helix" evidence="49">
    <location>
        <begin position="76"/>
        <end position="78"/>
    </location>
</feature>
<feature type="strand" evidence="49">
    <location>
        <begin position="80"/>
        <end position="83"/>
    </location>
</feature>
<feature type="strand" evidence="49">
    <location>
        <begin position="86"/>
        <end position="91"/>
    </location>
</feature>
<feature type="strand" evidence="49">
    <location>
        <begin position="97"/>
        <end position="107"/>
    </location>
</feature>
<feature type="turn" evidence="49">
    <location>
        <begin position="108"/>
        <end position="110"/>
    </location>
</feature>
<feature type="strand" evidence="49">
    <location>
        <begin position="111"/>
        <end position="123"/>
    </location>
</feature>
<feature type="strand" evidence="48">
    <location>
        <begin position="130"/>
        <end position="137"/>
    </location>
</feature>
<feature type="strand" evidence="48">
    <location>
        <begin position="143"/>
        <end position="147"/>
    </location>
</feature>
<feature type="strand" evidence="48">
    <location>
        <begin position="157"/>
        <end position="164"/>
    </location>
</feature>
<feature type="strand" evidence="52">
    <location>
        <begin position="165"/>
        <end position="168"/>
    </location>
</feature>
<feature type="strand" evidence="50">
    <location>
        <begin position="176"/>
        <end position="178"/>
    </location>
</feature>
<feature type="strand" evidence="48">
    <location>
        <begin position="181"/>
        <end position="183"/>
    </location>
</feature>
<feature type="strand" evidence="53">
    <location>
        <begin position="190"/>
        <end position="192"/>
    </location>
</feature>
<feature type="strand" evidence="48">
    <location>
        <begin position="194"/>
        <end position="202"/>
    </location>
</feature>
<feature type="strand" evidence="48">
    <location>
        <begin position="205"/>
        <end position="208"/>
    </location>
</feature>
<feature type="strand" evidence="48">
    <location>
        <begin position="212"/>
        <end position="214"/>
    </location>
</feature>
<feature type="helix" evidence="48">
    <location>
        <begin position="216"/>
        <end position="218"/>
    </location>
</feature>
<feature type="strand" evidence="48">
    <location>
        <begin position="219"/>
        <end position="221"/>
    </location>
</feature>
<feature type="strand" evidence="48">
    <location>
        <begin position="226"/>
        <end position="231"/>
    </location>
</feature>
<feature type="strand" evidence="49">
    <location>
        <begin position="234"/>
        <end position="238"/>
    </location>
</feature>
<feature type="strand" evidence="48">
    <location>
        <begin position="240"/>
        <end position="245"/>
    </location>
</feature>
<feature type="helix" evidence="48">
    <location>
        <begin position="248"/>
        <end position="251"/>
    </location>
</feature>
<feature type="strand" evidence="48">
    <location>
        <begin position="255"/>
        <end position="263"/>
    </location>
</feature>
<feature type="helix" evidence="48">
    <location>
        <begin position="274"/>
        <end position="277"/>
    </location>
</feature>
<feature type="strand" evidence="48">
    <location>
        <begin position="282"/>
        <end position="286"/>
    </location>
</feature>
<feature type="strand" evidence="48">
    <location>
        <begin position="291"/>
        <end position="303"/>
    </location>
</feature>
<feature type="strand" evidence="54">
    <location>
        <begin position="306"/>
        <end position="308"/>
    </location>
</feature>
<feature type="strand" evidence="48">
    <location>
        <begin position="317"/>
        <end position="321"/>
    </location>
</feature>
<feature type="helix" evidence="48">
    <location>
        <begin position="325"/>
        <end position="331"/>
    </location>
</feature>
<feature type="strand" evidence="51">
    <location>
        <begin position="332"/>
        <end position="338"/>
    </location>
</feature>
<feature type="strand" evidence="51">
    <location>
        <begin position="345"/>
        <end position="351"/>
    </location>
</feature>
<feature type="helix" evidence="51">
    <location>
        <begin position="356"/>
        <end position="359"/>
    </location>
</feature>
<feature type="strand" evidence="51">
    <location>
        <begin position="363"/>
        <end position="372"/>
    </location>
</feature>
<feature type="strand" evidence="53">
    <location>
        <begin position="373"/>
        <end position="375"/>
    </location>
</feature>
<feature type="strand" evidence="51">
    <location>
        <begin position="378"/>
        <end position="391"/>
    </location>
</feature>
<feature type="strand" evidence="51">
    <location>
        <begin position="396"/>
        <end position="406"/>
    </location>
</feature>
<feature type="strand" evidence="51">
    <location>
        <begin position="412"/>
        <end position="416"/>
    </location>
</feature>
<feature type="strand" evidence="51">
    <location>
        <begin position="428"/>
        <end position="435"/>
    </location>
</feature>
<feature type="strand" evidence="51">
    <location>
        <begin position="438"/>
        <end position="444"/>
    </location>
</feature>
<feature type="strand" evidence="51">
    <location>
        <begin position="452"/>
        <end position="460"/>
    </location>
</feature>
<feature type="strand" evidence="51">
    <location>
        <begin position="462"/>
        <end position="464"/>
    </location>
</feature>
<feature type="strand" evidence="51">
    <location>
        <begin position="469"/>
        <end position="474"/>
    </location>
</feature>
<feature type="strand" evidence="51">
    <location>
        <begin position="478"/>
        <end position="481"/>
    </location>
</feature>
<feature type="strand" evidence="51">
    <location>
        <begin position="491"/>
        <end position="500"/>
    </location>
</feature>
<feature type="strand" evidence="51">
    <location>
        <begin position="508"/>
        <end position="515"/>
    </location>
</feature>
<feature type="strand" evidence="51">
    <location>
        <begin position="525"/>
        <end position="530"/>
    </location>
</feature>
<feature type="strand" evidence="54">
    <location>
        <begin position="531"/>
        <end position="533"/>
    </location>
</feature>
<feature type="strand" evidence="51">
    <location>
        <begin position="535"/>
        <end position="539"/>
    </location>
</feature>
<feature type="helix" evidence="51">
    <location>
        <begin position="544"/>
        <end position="547"/>
    </location>
</feature>
<feature type="strand" evidence="51">
    <location>
        <begin position="553"/>
        <end position="560"/>
    </location>
</feature>
<feature type="strand" evidence="51">
    <location>
        <begin position="566"/>
        <end position="571"/>
    </location>
</feature>
<feature type="strand" evidence="51">
    <location>
        <begin position="575"/>
        <end position="579"/>
    </location>
</feature>
<feature type="strand" evidence="51">
    <location>
        <begin position="587"/>
        <end position="596"/>
    </location>
</feature>
<feature type="strand" evidence="51">
    <location>
        <begin position="599"/>
        <end position="602"/>
    </location>
</feature>
<feature type="strand" evidence="51">
    <location>
        <begin position="606"/>
        <end position="609"/>
    </location>
</feature>
<dbReference type="EMBL" id="M57230">
    <property type="protein sequence ID" value="AAA59155.1"/>
    <property type="molecule type" value="mRNA"/>
</dbReference>
<dbReference type="EMBL" id="AB015706">
    <property type="protein sequence ID" value="BAA78112.1"/>
    <property type="molecule type" value="mRNA"/>
</dbReference>
<dbReference type="EMBL" id="AB102802">
    <property type="protein sequence ID" value="BAD89393.1"/>
    <property type="molecule type" value="mRNA"/>
</dbReference>
<dbReference type="EMBL" id="EF064722">
    <property type="protein sequence ID" value="ABK41905.1"/>
    <property type="molecule type" value="Genomic_DNA"/>
</dbReference>
<dbReference type="EMBL" id="AC008914">
    <property type="status" value="NOT_ANNOTATED_CDS"/>
    <property type="molecule type" value="Genomic_DNA"/>
</dbReference>
<dbReference type="EMBL" id="AC016596">
    <property type="status" value="NOT_ANNOTATED_CDS"/>
    <property type="molecule type" value="Genomic_DNA"/>
</dbReference>
<dbReference type="EMBL" id="CH471123">
    <property type="protein sequence ID" value="EAW54936.1"/>
    <property type="molecule type" value="Genomic_DNA"/>
</dbReference>
<dbReference type="CCDS" id="CCDS3971.1">
    <molecule id="P40189-1"/>
</dbReference>
<dbReference type="CCDS" id="CCDS47209.1">
    <molecule id="P40189-2"/>
</dbReference>
<dbReference type="CCDS" id="CCDS54856.1">
    <molecule id="P40189-3"/>
</dbReference>
<dbReference type="PIR" id="A36337">
    <property type="entry name" value="A36337"/>
</dbReference>
<dbReference type="RefSeq" id="NP_001177910.1">
    <molecule id="P40189-3"/>
    <property type="nucleotide sequence ID" value="NM_001190981.2"/>
</dbReference>
<dbReference type="RefSeq" id="NP_002175.2">
    <molecule id="P40189-1"/>
    <property type="nucleotide sequence ID" value="NM_002184.3"/>
</dbReference>
<dbReference type="RefSeq" id="NP_786943.1">
    <molecule id="P40189-2"/>
    <property type="nucleotide sequence ID" value="NM_175767.3"/>
</dbReference>
<dbReference type="PDB" id="1BJ8">
    <property type="method" value="NMR"/>
    <property type="chains" value="A=219-325"/>
</dbReference>
<dbReference type="PDB" id="1BQU">
    <property type="method" value="X-ray"/>
    <property type="resolution" value="2.00 A"/>
    <property type="chains" value="A/B=122-333"/>
</dbReference>
<dbReference type="PDB" id="1I1R">
    <property type="method" value="X-ray"/>
    <property type="resolution" value="2.40 A"/>
    <property type="chains" value="A=23-325"/>
</dbReference>
<dbReference type="PDB" id="1P9M">
    <property type="method" value="X-ray"/>
    <property type="resolution" value="3.65 A"/>
    <property type="chains" value="A=23-321"/>
</dbReference>
<dbReference type="PDB" id="1PVH">
    <property type="method" value="X-ray"/>
    <property type="resolution" value="2.50 A"/>
    <property type="chains" value="A/C=123-323"/>
</dbReference>
<dbReference type="PDB" id="3L5H">
    <property type="method" value="X-ray"/>
    <property type="resolution" value="3.60 A"/>
    <property type="chains" value="A=24-612"/>
</dbReference>
<dbReference type="PDB" id="3L5I">
    <property type="method" value="X-ray"/>
    <property type="resolution" value="1.90 A"/>
    <property type="chains" value="A=323-612"/>
</dbReference>
<dbReference type="PDB" id="3L5J">
    <property type="method" value="X-ray"/>
    <property type="resolution" value="3.04 A"/>
    <property type="chains" value="A/B=323-610"/>
</dbReference>
<dbReference type="PDB" id="7U7N">
    <property type="method" value="EM"/>
    <property type="resolution" value="3.47 A"/>
    <property type="chains" value="B=23-321"/>
</dbReference>
<dbReference type="PDB" id="8D6A">
    <property type="method" value="EM"/>
    <property type="resolution" value="3.54 A"/>
    <property type="chains" value="A=23-619"/>
</dbReference>
<dbReference type="PDB" id="8D74">
    <property type="method" value="EM"/>
    <property type="resolution" value="3.03 A"/>
    <property type="chains" value="A=23-619"/>
</dbReference>
<dbReference type="PDB" id="8D7R">
    <property type="method" value="EM"/>
    <property type="resolution" value="3.90 A"/>
    <property type="chains" value="A=23-619"/>
</dbReference>
<dbReference type="PDB" id="8D82">
    <property type="method" value="EM"/>
    <property type="resolution" value="3.22 A"/>
    <property type="chains" value="A/E=23-700"/>
</dbReference>
<dbReference type="PDB" id="8D85">
    <property type="method" value="EM"/>
    <property type="resolution" value="3.81 A"/>
    <property type="chains" value="B=23-619"/>
</dbReference>
<dbReference type="PDB" id="8DPS">
    <property type="method" value="EM"/>
    <property type="resolution" value="3.47 A"/>
    <property type="chains" value="A/D=22-324"/>
</dbReference>
<dbReference type="PDB" id="8DPT">
    <property type="method" value="EM"/>
    <property type="resolution" value="4.00 A"/>
    <property type="chains" value="A/D=22-612"/>
</dbReference>
<dbReference type="PDB" id="8DPU">
    <property type="method" value="X-ray"/>
    <property type="resolution" value="3.78 A"/>
    <property type="chains" value="A/D/G/J/M/P=22-324"/>
</dbReference>
<dbReference type="PDB" id="8UPA">
    <property type="method" value="X-ray"/>
    <property type="resolution" value="3.30 A"/>
    <property type="chains" value="B/D=124-321"/>
</dbReference>
<dbReference type="PDB" id="8V29">
    <property type="method" value="EM"/>
    <property type="resolution" value="3.99 A"/>
    <property type="chains" value="B=23-619"/>
</dbReference>
<dbReference type="PDB" id="8V2A">
    <property type="method" value="EM"/>
    <property type="resolution" value="3.59 A"/>
    <property type="chains" value="B=23-619"/>
</dbReference>
<dbReference type="PDBsum" id="1BJ8"/>
<dbReference type="PDBsum" id="1BQU"/>
<dbReference type="PDBsum" id="1I1R"/>
<dbReference type="PDBsum" id="1P9M"/>
<dbReference type="PDBsum" id="1PVH"/>
<dbReference type="PDBsum" id="3L5H"/>
<dbReference type="PDBsum" id="3L5I"/>
<dbReference type="PDBsum" id="3L5J"/>
<dbReference type="PDBsum" id="7U7N"/>
<dbReference type="PDBsum" id="8D6A"/>
<dbReference type="PDBsum" id="8D74"/>
<dbReference type="PDBsum" id="8D7R"/>
<dbReference type="PDBsum" id="8D82"/>
<dbReference type="PDBsum" id="8D85"/>
<dbReference type="PDBsum" id="8DPS"/>
<dbReference type="PDBsum" id="8DPT"/>
<dbReference type="PDBsum" id="8DPU"/>
<dbReference type="PDBsum" id="8UPA"/>
<dbReference type="PDBsum" id="8V29"/>
<dbReference type="PDBsum" id="8V2A"/>
<dbReference type="BMRB" id="P40189"/>
<dbReference type="EMDB" id="EMD-26382"/>
<dbReference type="EMDB" id="EMD-27221"/>
<dbReference type="EMDB" id="EMD-27227"/>
<dbReference type="EMDB" id="EMD-27229"/>
<dbReference type="EMDB" id="EMD-27231"/>
<dbReference type="EMDB" id="EMD-27244"/>
<dbReference type="EMDB" id="EMD-27246"/>
<dbReference type="EMDB" id="EMD-27247"/>
<dbReference type="EMDB" id="EMD-27641"/>
<dbReference type="EMDB" id="EMD-27642"/>
<dbReference type="EMDB" id="EMD-42902"/>
<dbReference type="EMDB" id="EMD-42903"/>
<dbReference type="SASBDB" id="P40189"/>
<dbReference type="SMR" id="P40189"/>
<dbReference type="BioGRID" id="109786">
    <property type="interactions" value="75"/>
</dbReference>
<dbReference type="ComplexPortal" id="CPX-10334">
    <property type="entry name" value="Interleukin-35 receptor ligand type 1 complex"/>
</dbReference>
<dbReference type="ComplexPortal" id="CPX-10337">
    <property type="entry name" value="Interleukin-35 receptor ligand type 4 complex"/>
</dbReference>
<dbReference type="ComplexPortal" id="CPX-623">
    <property type="entry name" value="Interleukin 6-mIL6R-mIL6ST receptor-ligand classical signalling complex"/>
</dbReference>
<dbReference type="ComplexPortal" id="CPX-8836">
    <property type="entry name" value="Interleukin-27 receptor-ligand complex"/>
</dbReference>
<dbReference type="ComplexPortal" id="CPX-8967">
    <molecule id="P40189-1"/>
    <property type="entry name" value="Interleukin-6 sIL6R-mIL6ST receptor-ligand trans-signalling complex"/>
</dbReference>
<dbReference type="ComplexPortal" id="CPX-8968">
    <molecule id="P40189-1"/>
    <property type="entry name" value="Membrane bound interleukin-6 mIL6R receptor-ligand cluster-signalling complex"/>
</dbReference>
<dbReference type="ComplexPortal" id="CPX-8969">
    <molecule id="P40189-2"/>
    <property type="entry name" value="Interleukin-6 sIL6R-sIL6ST buffering receptor-ligand complex"/>
</dbReference>
<dbReference type="ComplexPortal" id="CPX-9721">
    <property type="entry name" value="Interleukin 11-sIL11RA-IL-6ST receptor-ligand trans-signalling complex"/>
</dbReference>
<dbReference type="ComplexPortal" id="CPX-9781">
    <property type="entry name" value="Interleukin 11-mIL11RA-IL-6ST receptor-ligand complex"/>
</dbReference>
<dbReference type="ComplexPortal" id="CPX-9801">
    <molecule id="P40189-2"/>
    <property type="entry name" value="IL11-sIL11RA-sIL-6ST receptor-ligand buffering complex"/>
</dbReference>
<dbReference type="CORUM" id="P40189"/>
<dbReference type="DIP" id="DIP-95N"/>
<dbReference type="FunCoup" id="P40189">
    <property type="interactions" value="568"/>
</dbReference>
<dbReference type="IntAct" id="P40189">
    <property type="interactions" value="43"/>
</dbReference>
<dbReference type="MINT" id="P40189"/>
<dbReference type="STRING" id="9606.ENSP00000370698"/>
<dbReference type="BindingDB" id="P40189"/>
<dbReference type="ChEMBL" id="CHEMBL3124734"/>
<dbReference type="DrugCentral" id="P40189"/>
<dbReference type="GuidetoPHARMACOLOGY" id="2317"/>
<dbReference type="GlyConnect" id="649">
    <property type="glycosylation" value="16 N-Linked glycans (9 sites)"/>
</dbReference>
<dbReference type="GlyCosmos" id="P40189">
    <property type="glycosylation" value="13 sites, 18 glycans"/>
</dbReference>
<dbReference type="GlyGen" id="P40189">
    <property type="glycosylation" value="15 sites, 46 N-linked glycans (12 sites), 1 O-linked glycan (2 sites)"/>
</dbReference>
<dbReference type="iPTMnet" id="P40189"/>
<dbReference type="PhosphoSitePlus" id="P40189"/>
<dbReference type="SwissPalm" id="P40189"/>
<dbReference type="BioMuta" id="IL6ST"/>
<dbReference type="DMDM" id="215273999"/>
<dbReference type="jPOST" id="P40189"/>
<dbReference type="MassIVE" id="P40189"/>
<dbReference type="PaxDb" id="9606-ENSP00000370698"/>
<dbReference type="PeptideAtlas" id="P40189"/>
<dbReference type="ProteomicsDB" id="55338">
    <molecule id="P40189-1"/>
</dbReference>
<dbReference type="ProteomicsDB" id="55339">
    <molecule id="P40189-2"/>
</dbReference>
<dbReference type="ProteomicsDB" id="55340">
    <molecule id="P40189-3"/>
</dbReference>
<dbReference type="Pumba" id="P40189"/>
<dbReference type="Antibodypedia" id="2448">
    <property type="antibodies" value="831 antibodies from 40 providers"/>
</dbReference>
<dbReference type="DNASU" id="3572"/>
<dbReference type="Ensembl" id="ENST00000381294.8">
    <molecule id="P40189-3"/>
    <property type="protein sequence ID" value="ENSP00000370694.3"/>
    <property type="gene ID" value="ENSG00000134352.21"/>
</dbReference>
<dbReference type="Ensembl" id="ENST00000381298.7">
    <molecule id="P40189-1"/>
    <property type="protein sequence ID" value="ENSP00000370698.2"/>
    <property type="gene ID" value="ENSG00000134352.21"/>
</dbReference>
<dbReference type="Ensembl" id="ENST00000502326.7">
    <molecule id="P40189-1"/>
    <property type="protein sequence ID" value="ENSP00000462158.1"/>
    <property type="gene ID" value="ENSG00000134352.21"/>
</dbReference>
<dbReference type="Ensembl" id="ENST00000522633.2">
    <molecule id="P40189-2"/>
    <property type="protein sequence ID" value="ENSP00000435399.1"/>
    <property type="gene ID" value="ENSG00000134352.21"/>
</dbReference>
<dbReference type="Ensembl" id="ENST00000698645.1">
    <molecule id="P40189-1"/>
    <property type="protein sequence ID" value="ENSP00000513858.1"/>
    <property type="gene ID" value="ENSG00000134352.21"/>
</dbReference>
<dbReference type="GeneID" id="3572"/>
<dbReference type="KEGG" id="hsa:3572"/>
<dbReference type="MANE-Select" id="ENST00000381298.7">
    <property type="protein sequence ID" value="ENSP00000370698.2"/>
    <property type="RefSeq nucleotide sequence ID" value="NM_002184.4"/>
    <property type="RefSeq protein sequence ID" value="NP_002175.2"/>
</dbReference>
<dbReference type="UCSC" id="uc003jqq.4">
    <molecule id="P40189-1"/>
    <property type="organism name" value="human"/>
</dbReference>
<dbReference type="AGR" id="HGNC:6021"/>
<dbReference type="CTD" id="3572"/>
<dbReference type="DisGeNET" id="3572"/>
<dbReference type="GeneCards" id="IL6ST"/>
<dbReference type="HGNC" id="HGNC:6021">
    <property type="gene designation" value="IL6ST"/>
</dbReference>
<dbReference type="HPA" id="ENSG00000134352">
    <property type="expression patterns" value="Low tissue specificity"/>
</dbReference>
<dbReference type="MalaCards" id="IL6ST"/>
<dbReference type="MIM" id="600694">
    <property type="type" value="gene"/>
</dbReference>
<dbReference type="MIM" id="618523">
    <property type="type" value="phenotype"/>
</dbReference>
<dbReference type="MIM" id="619750">
    <property type="type" value="phenotype"/>
</dbReference>
<dbReference type="MIM" id="619751">
    <property type="type" value="phenotype"/>
</dbReference>
<dbReference type="MIM" id="619752">
    <property type="type" value="phenotype"/>
</dbReference>
<dbReference type="neXtProt" id="NX_P40189"/>
<dbReference type="OpenTargets" id="ENSG00000134352"/>
<dbReference type="Orphanet" id="656313">
    <property type="disease" value="Autosomal dominant combined immunodeficiency due to partial IL6ST deficiency"/>
</dbReference>
<dbReference type="Orphanet" id="656283">
    <property type="disease" value="Autosomal recessive combined immunodeficiency due to complete IL6ST deficiency"/>
</dbReference>
<dbReference type="Orphanet" id="656300">
    <property type="disease" value="Autosomal recessive combined immunodeficiency due to partial IL6ST deficiency"/>
</dbReference>
<dbReference type="PharmGKB" id="PA29837"/>
<dbReference type="VEuPathDB" id="HostDB:ENSG00000134352"/>
<dbReference type="eggNOG" id="ENOG502QXEG">
    <property type="taxonomic scope" value="Eukaryota"/>
</dbReference>
<dbReference type="GeneTree" id="ENSGT00940000159608"/>
<dbReference type="HOGENOM" id="CLU_017990_0_0_1"/>
<dbReference type="InParanoid" id="P40189"/>
<dbReference type="OMA" id="RYILEWC"/>
<dbReference type="OrthoDB" id="9934532at2759"/>
<dbReference type="PAN-GO" id="P40189">
    <property type="GO annotations" value="7 GO annotations based on evolutionary models"/>
</dbReference>
<dbReference type="PhylomeDB" id="P40189"/>
<dbReference type="TreeFam" id="TF338122"/>
<dbReference type="PathwayCommons" id="P40189"/>
<dbReference type="Reactome" id="R-HSA-1059683">
    <property type="pathway name" value="Interleukin-6 signaling"/>
</dbReference>
<dbReference type="Reactome" id="R-HSA-110056">
    <molecule id="P40189-1"/>
    <property type="pathway name" value="MAPK3 (ERK1) activation"/>
</dbReference>
<dbReference type="Reactome" id="R-HSA-112411">
    <molecule id="P40189-1"/>
    <property type="pathway name" value="MAPK1 (ERK2) activation"/>
</dbReference>
<dbReference type="Reactome" id="R-HSA-6788467">
    <property type="pathway name" value="IL-6-type cytokine receptor ligand interactions"/>
</dbReference>
<dbReference type="Reactome" id="R-HSA-8984722">
    <property type="pathway name" value="Interleukin-35 Signalling"/>
</dbReference>
<dbReference type="Reactome" id="R-HSA-9020956">
    <property type="pathway name" value="Interleukin-27 signaling"/>
</dbReference>
<dbReference type="SignaLink" id="P40189"/>
<dbReference type="SIGNOR" id="P40189"/>
<dbReference type="BioGRID-ORCS" id="3572">
    <property type="hits" value="41 hits in 1176 CRISPR screens"/>
</dbReference>
<dbReference type="ChiTaRS" id="IL6ST">
    <property type="organism name" value="human"/>
</dbReference>
<dbReference type="EvolutionaryTrace" id="P40189"/>
<dbReference type="GeneWiki" id="Glycoprotein_130"/>
<dbReference type="GenomeRNAi" id="3572"/>
<dbReference type="Pharos" id="P40189">
    <property type="development level" value="Tclin"/>
</dbReference>
<dbReference type="PRO" id="PR:P40189"/>
<dbReference type="Proteomes" id="UP000005640">
    <property type="component" value="Chromosome 5"/>
</dbReference>
<dbReference type="RNAct" id="P40189">
    <property type="molecule type" value="protein"/>
</dbReference>
<dbReference type="Bgee" id="ENSG00000134352">
    <property type="expression patterns" value="Expressed in parietal pleura and 213 other cell types or tissues"/>
</dbReference>
<dbReference type="ExpressionAtlas" id="P40189">
    <property type="expression patterns" value="baseline and differential"/>
</dbReference>
<dbReference type="GO" id="GO:0070110">
    <property type="term" value="C:ciliary neurotrophic factor receptor complex"/>
    <property type="evidence" value="ECO:0000314"/>
    <property type="project" value="BHF-UCL"/>
</dbReference>
<dbReference type="GO" id="GO:0030425">
    <property type="term" value="C:dendrite"/>
    <property type="evidence" value="ECO:0007669"/>
    <property type="project" value="Ensembl"/>
</dbReference>
<dbReference type="GO" id="GO:0009897">
    <property type="term" value="C:external side of plasma membrane"/>
    <property type="evidence" value="ECO:0000318"/>
    <property type="project" value="GO_Central"/>
</dbReference>
<dbReference type="GO" id="GO:0070062">
    <property type="term" value="C:extracellular exosome"/>
    <property type="evidence" value="ECO:0007005"/>
    <property type="project" value="UniProtKB"/>
</dbReference>
<dbReference type="GO" id="GO:0005576">
    <property type="term" value="C:extracellular region"/>
    <property type="evidence" value="ECO:0000304"/>
    <property type="project" value="Reactome"/>
</dbReference>
<dbReference type="GO" id="GO:0005615">
    <property type="term" value="C:extracellular space"/>
    <property type="evidence" value="ECO:0000314"/>
    <property type="project" value="BHF-UCL"/>
</dbReference>
<dbReference type="GO" id="GO:0005896">
    <property type="term" value="C:interleukin-6 receptor complex"/>
    <property type="evidence" value="ECO:0000314"/>
    <property type="project" value="BHF-UCL"/>
</dbReference>
<dbReference type="GO" id="GO:0016020">
    <property type="term" value="C:membrane"/>
    <property type="evidence" value="ECO:0007005"/>
    <property type="project" value="UniProtKB"/>
</dbReference>
<dbReference type="GO" id="GO:0045121">
    <property type="term" value="C:membrane raft"/>
    <property type="evidence" value="ECO:0000314"/>
    <property type="project" value="ARUK-UCL"/>
</dbReference>
<dbReference type="GO" id="GO:0043025">
    <property type="term" value="C:neuronal cell body"/>
    <property type="evidence" value="ECO:0007669"/>
    <property type="project" value="Ensembl"/>
</dbReference>
<dbReference type="GO" id="GO:0005900">
    <property type="term" value="C:oncostatin-M receptor complex"/>
    <property type="evidence" value="ECO:0000314"/>
    <property type="project" value="BHF-UCL"/>
</dbReference>
<dbReference type="GO" id="GO:0005886">
    <property type="term" value="C:plasma membrane"/>
    <property type="evidence" value="ECO:0000314"/>
    <property type="project" value="UniProt"/>
</dbReference>
<dbReference type="GO" id="GO:0043235">
    <property type="term" value="C:receptor complex"/>
    <property type="evidence" value="ECO:0000318"/>
    <property type="project" value="GO_Central"/>
</dbReference>
<dbReference type="GO" id="GO:0004897">
    <property type="term" value="F:ciliary neurotrophic factor receptor activity"/>
    <property type="evidence" value="ECO:0000314"/>
    <property type="project" value="BHF-UCL"/>
</dbReference>
<dbReference type="GO" id="GO:0005127">
    <property type="term" value="F:ciliary neurotrophic factor receptor binding"/>
    <property type="evidence" value="ECO:0000353"/>
    <property type="project" value="BHF-UCL"/>
</dbReference>
<dbReference type="GO" id="GO:0015026">
    <property type="term" value="F:coreceptor activity"/>
    <property type="evidence" value="ECO:0000314"/>
    <property type="project" value="UniProt"/>
</dbReference>
<dbReference type="GO" id="GO:0019955">
    <property type="term" value="F:cytokine binding"/>
    <property type="evidence" value="ECO:0000318"/>
    <property type="project" value="GO_Central"/>
</dbReference>
<dbReference type="GO" id="GO:0004896">
    <property type="term" value="F:cytokine receptor activity"/>
    <property type="evidence" value="ECO:0000318"/>
    <property type="project" value="GO_Central"/>
</dbReference>
<dbReference type="GO" id="GO:0019838">
    <property type="term" value="F:growth factor binding"/>
    <property type="evidence" value="ECO:0000353"/>
    <property type="project" value="BHF-UCL"/>
</dbReference>
<dbReference type="GO" id="GO:0042802">
    <property type="term" value="F:identical protein binding"/>
    <property type="evidence" value="ECO:0000353"/>
    <property type="project" value="IntAct"/>
</dbReference>
<dbReference type="GO" id="GO:0019970">
    <property type="term" value="F:interleukin-11 binding"/>
    <property type="evidence" value="ECO:0007669"/>
    <property type="project" value="Ensembl"/>
</dbReference>
<dbReference type="GO" id="GO:0004921">
    <property type="term" value="F:interleukin-11 receptor activity"/>
    <property type="evidence" value="ECO:0007669"/>
    <property type="project" value="Ensembl"/>
</dbReference>
<dbReference type="GO" id="GO:0045509">
    <property type="term" value="F:interleukin-27 receptor activity"/>
    <property type="evidence" value="ECO:0000315"/>
    <property type="project" value="BHF-UCL"/>
</dbReference>
<dbReference type="GO" id="GO:0030296">
    <property type="term" value="F:protein tyrosine kinase activator activity"/>
    <property type="evidence" value="ECO:0000314"/>
    <property type="project" value="UniProt"/>
</dbReference>
<dbReference type="GO" id="GO:0097110">
    <property type="term" value="F:scaffold protein binding"/>
    <property type="evidence" value="ECO:0000353"/>
    <property type="project" value="ARUK-UCL"/>
</dbReference>
<dbReference type="GO" id="GO:0097696">
    <property type="term" value="P:cell surface receptor signaling pathway via STAT"/>
    <property type="evidence" value="ECO:0000315"/>
    <property type="project" value="BHF-UCL"/>
</dbReference>
<dbReference type="GO" id="GO:0070120">
    <property type="term" value="P:ciliary neurotrophic factor-mediated signaling pathway"/>
    <property type="evidence" value="ECO:0000314"/>
    <property type="project" value="BHF-UCL"/>
</dbReference>
<dbReference type="GO" id="GO:0019221">
    <property type="term" value="P:cytokine-mediated signaling pathway"/>
    <property type="evidence" value="ECO:0000314"/>
    <property type="project" value="BHF-UCL"/>
</dbReference>
<dbReference type="GO" id="GO:0005977">
    <property type="term" value="P:glycogen metabolic process"/>
    <property type="evidence" value="ECO:0007669"/>
    <property type="project" value="Ensembl"/>
</dbReference>
<dbReference type="GO" id="GO:0038154">
    <property type="term" value="P:interleukin-11-mediated signaling pathway"/>
    <property type="evidence" value="ECO:0000314"/>
    <property type="project" value="UniProt"/>
</dbReference>
<dbReference type="GO" id="GO:0070106">
    <property type="term" value="P:interleukin-27-mediated signaling pathway"/>
    <property type="evidence" value="ECO:0000315"/>
    <property type="project" value="BHF-UCL"/>
</dbReference>
<dbReference type="GO" id="GO:0070102">
    <property type="term" value="P:interleukin-6-mediated signaling pathway"/>
    <property type="evidence" value="ECO:0000314"/>
    <property type="project" value="UniProtKB"/>
</dbReference>
<dbReference type="GO" id="GO:0060576">
    <property type="term" value="P:intestinal epithelial cell development"/>
    <property type="evidence" value="ECO:0000314"/>
    <property type="project" value="UniProtKB"/>
</dbReference>
<dbReference type="GO" id="GO:0048861">
    <property type="term" value="P:leukemia inhibitory factor signaling pathway"/>
    <property type="evidence" value="ECO:0000314"/>
    <property type="project" value="BHF-UCL"/>
</dbReference>
<dbReference type="GO" id="GO:0043066">
    <property type="term" value="P:negative regulation of apoptotic process"/>
    <property type="evidence" value="ECO:0000304"/>
    <property type="project" value="BHF-UCL"/>
</dbReference>
<dbReference type="GO" id="GO:0070104">
    <property type="term" value="P:negative regulation of interleukin-6-mediated signaling pathway"/>
    <property type="evidence" value="ECO:0000314"/>
    <property type="project" value="BHF-UCL"/>
</dbReference>
<dbReference type="GO" id="GO:0043524">
    <property type="term" value="P:negative regulation of neuron apoptotic process"/>
    <property type="evidence" value="ECO:0000315"/>
    <property type="project" value="UniProtKB"/>
</dbReference>
<dbReference type="GO" id="GO:0038165">
    <property type="term" value="P:oncostatin-M-mediated signaling pathway"/>
    <property type="evidence" value="ECO:0000315"/>
    <property type="project" value="BHF-UCL"/>
</dbReference>
<dbReference type="GO" id="GO:0002675">
    <property type="term" value="P:positive regulation of acute inflammatory response"/>
    <property type="evidence" value="ECO:0000305"/>
    <property type="project" value="BHF-UCL"/>
</dbReference>
<dbReference type="GO" id="GO:0002821">
    <property type="term" value="P:positive regulation of adaptive immune response"/>
    <property type="evidence" value="ECO:0000315"/>
    <property type="project" value="BHF-UCL"/>
</dbReference>
<dbReference type="GO" id="GO:0048711">
    <property type="term" value="P:positive regulation of astrocyte differentiation"/>
    <property type="evidence" value="ECO:0007669"/>
    <property type="project" value="Ensembl"/>
</dbReference>
<dbReference type="GO" id="GO:0010613">
    <property type="term" value="P:positive regulation of cardiac muscle hypertrophy"/>
    <property type="evidence" value="ECO:0000304"/>
    <property type="project" value="BHF-UCL"/>
</dbReference>
<dbReference type="GO" id="GO:0008284">
    <property type="term" value="P:positive regulation of cell population proliferation"/>
    <property type="evidence" value="ECO:0000314"/>
    <property type="project" value="BHF-UCL"/>
</dbReference>
<dbReference type="GO" id="GO:0045747">
    <property type="term" value="P:positive regulation of Notch signaling pathway"/>
    <property type="evidence" value="ECO:0000314"/>
    <property type="project" value="UniProtKB"/>
</dbReference>
<dbReference type="GO" id="GO:0045669">
    <property type="term" value="P:positive regulation of osteoblast differentiation"/>
    <property type="evidence" value="ECO:0000315"/>
    <property type="project" value="BHF-UCL"/>
</dbReference>
<dbReference type="GO" id="GO:1901731">
    <property type="term" value="P:positive regulation of platelet aggregation"/>
    <property type="evidence" value="ECO:0000304"/>
    <property type="project" value="ARUK-UCL"/>
</dbReference>
<dbReference type="GO" id="GO:0042102">
    <property type="term" value="P:positive regulation of T cell proliferation"/>
    <property type="evidence" value="ECO:0000315"/>
    <property type="project" value="BHF-UCL"/>
</dbReference>
<dbReference type="GO" id="GO:0010575">
    <property type="term" value="P:positive regulation of vascular endothelial growth factor production"/>
    <property type="evidence" value="ECO:0000304"/>
    <property type="project" value="BHF-UCL"/>
</dbReference>
<dbReference type="GO" id="GO:0034097">
    <property type="term" value="P:response to cytokine"/>
    <property type="evidence" value="ECO:0000314"/>
    <property type="project" value="BHF-UCL"/>
</dbReference>
<dbReference type="GO" id="GO:0072540">
    <property type="term" value="P:T-helper 17 cell lineage commitment"/>
    <property type="evidence" value="ECO:0000250"/>
    <property type="project" value="UniProt"/>
</dbReference>
<dbReference type="CDD" id="cd00063">
    <property type="entry name" value="FN3"/>
    <property type="match status" value="2"/>
</dbReference>
<dbReference type="FunFam" id="2.60.40.10:FF:000281">
    <property type="entry name" value="Cytokine receptor like factor 1"/>
    <property type="match status" value="1"/>
</dbReference>
<dbReference type="FunFam" id="2.60.40.10:FF:000414">
    <property type="entry name" value="Interleukin-6 receptor subunit beta"/>
    <property type="match status" value="1"/>
</dbReference>
<dbReference type="FunFam" id="2.60.40.10:FF:000524">
    <property type="entry name" value="Interleukin-6 receptor subunit beta"/>
    <property type="match status" value="1"/>
</dbReference>
<dbReference type="FunFam" id="2.60.40.10:FF:000542">
    <property type="entry name" value="Interleukin-6 receptor subunit beta"/>
    <property type="match status" value="1"/>
</dbReference>
<dbReference type="FunFam" id="2.60.40.10:FF:000855">
    <property type="entry name" value="Interleukin-6 receptor subunit beta"/>
    <property type="match status" value="1"/>
</dbReference>
<dbReference type="FunFam" id="2.60.40.10:FF:000563">
    <property type="entry name" value="interleukin-6 receptor subunit beta"/>
    <property type="match status" value="1"/>
</dbReference>
<dbReference type="Gene3D" id="2.60.40.10">
    <property type="entry name" value="Immunoglobulins"/>
    <property type="match status" value="6"/>
</dbReference>
<dbReference type="InterPro" id="IPR003961">
    <property type="entry name" value="FN3_dom"/>
</dbReference>
<dbReference type="InterPro" id="IPR036116">
    <property type="entry name" value="FN3_sf"/>
</dbReference>
<dbReference type="InterPro" id="IPR003529">
    <property type="entry name" value="Hematopoietin_rcpt_Gp130_CS"/>
</dbReference>
<dbReference type="InterPro" id="IPR013783">
    <property type="entry name" value="Ig-like_fold"/>
</dbReference>
<dbReference type="InterPro" id="IPR010457">
    <property type="entry name" value="IgC2-like_lig-bd"/>
</dbReference>
<dbReference type="InterPro" id="IPR050379">
    <property type="entry name" value="Type-I_Cytokine_Rcpt"/>
</dbReference>
<dbReference type="InterPro" id="IPR015321">
    <property type="entry name" value="TypeI_recpt_CBD"/>
</dbReference>
<dbReference type="PANTHER" id="PTHR23036">
    <property type="entry name" value="CYTOKINE RECEPTOR"/>
    <property type="match status" value="1"/>
</dbReference>
<dbReference type="PANTHER" id="PTHR23036:SF151">
    <property type="entry name" value="FIBRONECTIN TYPE-III DOMAIN-CONTAINING PROTEIN"/>
    <property type="match status" value="1"/>
</dbReference>
<dbReference type="Pfam" id="PF00041">
    <property type="entry name" value="fn3"/>
    <property type="match status" value="2"/>
</dbReference>
<dbReference type="Pfam" id="PF09240">
    <property type="entry name" value="IL6Ra-bind"/>
    <property type="match status" value="1"/>
</dbReference>
<dbReference type="Pfam" id="PF06328">
    <property type="entry name" value="Lep_receptor_Ig"/>
    <property type="match status" value="1"/>
</dbReference>
<dbReference type="SMART" id="SM00060">
    <property type="entry name" value="FN3"/>
    <property type="match status" value="5"/>
</dbReference>
<dbReference type="SUPFAM" id="SSF49265">
    <property type="entry name" value="Fibronectin type III"/>
    <property type="match status" value="5"/>
</dbReference>
<dbReference type="PROSITE" id="PS50853">
    <property type="entry name" value="FN3"/>
    <property type="match status" value="4"/>
</dbReference>
<dbReference type="PROSITE" id="PS01353">
    <property type="entry name" value="HEMATOPO_REC_L_F2"/>
    <property type="match status" value="1"/>
</dbReference>
<reference key="1">
    <citation type="journal article" date="1990" name="Cell">
        <title>Molecular cloning and expression of an IL-6 signal transducer, gp130.</title>
        <authorList>
            <person name="Hibi M."/>
            <person name="Murakami M."/>
            <person name="Saito M."/>
            <person name="Hirano T."/>
            <person name="Taga T."/>
            <person name="Kishimoto T."/>
        </authorList>
    </citation>
    <scope>NUCLEOTIDE SEQUENCE [MRNA] (ISOFORM 1)</scope>
    <scope>FUNCTION</scope>
    <scope>TISSUE SPECIFICITY</scope>
    <scope>VARIANT VAL-8</scope>
    <scope>SUBUNIT</scope>
    <source>
        <tissue>Myeloma</tissue>
        <tissue>Placenta</tissue>
    </source>
</reference>
<reference key="2">
    <citation type="journal article" date="2000" name="J. Clin. Invest.">
        <title>Cloning of novel soluble gp130 and detection of its neutralizing autoantibodies in rheumatoid arthritis.</title>
        <authorList>
            <person name="Tanaka M."/>
            <person name="Kishimura M."/>
            <person name="Ozaki S."/>
            <person name="Osakada F."/>
            <person name="Hashimoto H."/>
            <person name="Okubo M."/>
            <person name="Murakami M."/>
            <person name="Nakao K."/>
        </authorList>
    </citation>
    <scope>NUCLEOTIDE SEQUENCE [MRNA] (ISOFORM 2)</scope>
    <scope>VARIANT VAL-8</scope>
    <scope>TISSUE SPECIFICITY</scope>
    <source>
        <tissue>Synovium</tissue>
    </source>
</reference>
<reference key="3">
    <citation type="submission" date="2003-02" db="EMBL/GenBank/DDBJ databases">
        <title>IL6ST mRNA, nirs splice variant 4.</title>
        <authorList>
            <person name="Hayashi A."/>
            <person name="Sameshima E."/>
            <person name="Tabata Y."/>
            <person name="Iida K."/>
            <person name="Mitsuyama M."/>
            <person name="Kanai S."/>
            <person name="Furuya T."/>
            <person name="Saito T."/>
        </authorList>
    </citation>
    <scope>NUCLEOTIDE SEQUENCE [MRNA] (ISOFORM 3)</scope>
</reference>
<reference key="4">
    <citation type="submission" date="2006-10" db="EMBL/GenBank/DDBJ databases">
        <authorList>
            <person name="Livingston R.J."/>
            <person name="Shaffer T."/>
            <person name="McFarland I."/>
            <person name="Nguyen C.P."/>
            <person name="Stanaway I.B."/>
            <person name="Rajkumar N."/>
            <person name="Johnson E.J."/>
            <person name="da Ponte S.H."/>
            <person name="Willa H."/>
            <person name="Ahearn M.O."/>
            <person name="Bertucci C."/>
            <person name="Acklestad J."/>
            <person name="Carroll A."/>
            <person name="Swanson J."/>
            <person name="Gildersleeve H.I."/>
            <person name="Nickerson D.A."/>
        </authorList>
    </citation>
    <scope>NUCLEOTIDE SEQUENCE [GENOMIC DNA]</scope>
</reference>
<reference key="5">
    <citation type="journal article" date="2004" name="Nature">
        <title>The DNA sequence and comparative analysis of human chromosome 5.</title>
        <authorList>
            <person name="Schmutz J."/>
            <person name="Martin J."/>
            <person name="Terry A."/>
            <person name="Couronne O."/>
            <person name="Grimwood J."/>
            <person name="Lowry S."/>
            <person name="Gordon L.A."/>
            <person name="Scott D."/>
            <person name="Xie G."/>
            <person name="Huang W."/>
            <person name="Hellsten U."/>
            <person name="Tran-Gyamfi M."/>
            <person name="She X."/>
            <person name="Prabhakar S."/>
            <person name="Aerts A."/>
            <person name="Altherr M."/>
            <person name="Bajorek E."/>
            <person name="Black S."/>
            <person name="Branscomb E."/>
            <person name="Caoile C."/>
            <person name="Challacombe J.F."/>
            <person name="Chan Y.M."/>
            <person name="Denys M."/>
            <person name="Detter J.C."/>
            <person name="Escobar J."/>
            <person name="Flowers D."/>
            <person name="Fotopulos D."/>
            <person name="Glavina T."/>
            <person name="Gomez M."/>
            <person name="Gonzales E."/>
            <person name="Goodstein D."/>
            <person name="Grigoriev I."/>
            <person name="Groza M."/>
            <person name="Hammon N."/>
            <person name="Hawkins T."/>
            <person name="Haydu L."/>
            <person name="Israni S."/>
            <person name="Jett J."/>
            <person name="Kadner K."/>
            <person name="Kimball H."/>
            <person name="Kobayashi A."/>
            <person name="Lopez F."/>
            <person name="Lou Y."/>
            <person name="Martinez D."/>
            <person name="Medina C."/>
            <person name="Morgan J."/>
            <person name="Nandkeshwar R."/>
            <person name="Noonan J.P."/>
            <person name="Pitluck S."/>
            <person name="Pollard M."/>
            <person name="Predki P."/>
            <person name="Priest J."/>
            <person name="Ramirez L."/>
            <person name="Retterer J."/>
            <person name="Rodriguez A."/>
            <person name="Rogers S."/>
            <person name="Salamov A."/>
            <person name="Salazar A."/>
            <person name="Thayer N."/>
            <person name="Tice H."/>
            <person name="Tsai M."/>
            <person name="Ustaszewska A."/>
            <person name="Vo N."/>
            <person name="Wheeler J."/>
            <person name="Wu K."/>
            <person name="Yang J."/>
            <person name="Dickson M."/>
            <person name="Cheng J.-F."/>
            <person name="Eichler E.E."/>
            <person name="Olsen A."/>
            <person name="Pennacchio L.A."/>
            <person name="Rokhsar D.S."/>
            <person name="Richardson P."/>
            <person name="Lucas S.M."/>
            <person name="Myers R.M."/>
            <person name="Rubin E.M."/>
        </authorList>
    </citation>
    <scope>NUCLEOTIDE SEQUENCE [LARGE SCALE GENOMIC DNA]</scope>
</reference>
<reference key="6">
    <citation type="submission" date="2005-07" db="EMBL/GenBank/DDBJ databases">
        <authorList>
            <person name="Mural R.J."/>
            <person name="Istrail S."/>
            <person name="Sutton G.G."/>
            <person name="Florea L."/>
            <person name="Halpern A.L."/>
            <person name="Mobarry C.M."/>
            <person name="Lippert R."/>
            <person name="Walenz B."/>
            <person name="Shatkay H."/>
            <person name="Dew I."/>
            <person name="Miller J.R."/>
            <person name="Flanigan M.J."/>
            <person name="Edwards N.J."/>
            <person name="Bolanos R."/>
            <person name="Fasulo D."/>
            <person name="Halldorsson B.V."/>
            <person name="Hannenhalli S."/>
            <person name="Turner R."/>
            <person name="Yooseph S."/>
            <person name="Lu F."/>
            <person name="Nusskern D.R."/>
            <person name="Shue B.C."/>
            <person name="Zheng X.H."/>
            <person name="Zhong F."/>
            <person name="Delcher A.L."/>
            <person name="Huson D.H."/>
            <person name="Kravitz S.A."/>
            <person name="Mouchard L."/>
            <person name="Reinert K."/>
            <person name="Remington K.A."/>
            <person name="Clark A.G."/>
            <person name="Waterman M.S."/>
            <person name="Eichler E.E."/>
            <person name="Adams M.D."/>
            <person name="Hunkapiller M.W."/>
            <person name="Myers E.W."/>
            <person name="Venter J.C."/>
        </authorList>
    </citation>
    <scope>NUCLEOTIDE SEQUENCE [LARGE SCALE GENOMIC DNA]</scope>
</reference>
<reference key="7">
    <citation type="journal article" date="2001" name="J. Biol. Chem.">
        <title>Determination of the disulfide structure and N-glycosylation sites of the extracellular domain of the human signal transducer gp130.</title>
        <authorList>
            <person name="Moritz R.L."/>
            <person name="Hall N.E."/>
            <person name="Connolly L.M."/>
            <person name="Simpson R.J."/>
        </authorList>
    </citation>
    <scope>PARTIAL PROTEIN SEQUENCE</scope>
    <scope>DISULFIDE BONDS</scope>
    <scope>GLYCOSYLATION AT ASN-43; ASN-83; ASN-131; ASN-157; ASN-227; ASN-379; ASN-383; ASN-553 AND ASN-564</scope>
</reference>
<reference key="8">
    <citation type="journal article" date="1996" name="J. Biol. Chem.">
        <title>Dual oncostatin M (OSM) receptors. Cloning and characterization of an alternative signaling subunit conferring OSM-specific receptor activation.</title>
        <authorList>
            <person name="Mosley B."/>
            <person name="De Imus C."/>
            <person name="Friend D."/>
            <person name="Boiani N."/>
            <person name="Thoma B."/>
            <person name="Park L.S."/>
            <person name="Cosman D."/>
        </authorList>
    </citation>
    <scope>SUBUNIT</scope>
    <scope>INDUCTION</scope>
</reference>
<reference key="9">
    <citation type="journal article" date="1997" name="Exp. Hematol.">
        <title>Signal transduction of interleukin-6 involves tyrosine phosphorylation of multiple cytosolic proteins and activation of Src-family kinases Fyn, Hck, and Lyn in multiple myeloma cell lines.</title>
        <authorList>
            <person name="Hallek M."/>
            <person name="Neumann C."/>
            <person name="Schaffer M."/>
            <person name="Danhauser-Riedl S."/>
            <person name="von Bubnoff N."/>
            <person name="de Vos G."/>
            <person name="Druker B.J."/>
            <person name="Yasukawa K."/>
            <person name="Griffin J.D."/>
            <person name="Emmerich B."/>
        </authorList>
    </citation>
    <scope>INTERACTION WITH HCK</scope>
</reference>
<reference key="10">
    <citation type="journal article" date="2000" name="J. Biol. Chem.">
        <title>Phosphorylation of human gp130 at Ser-782 adjacent to the di-leucine internalization motif. Effects on expression and signaling.</title>
        <authorList>
            <person name="Gibson R.M."/>
            <person name="Schiemann W.P."/>
            <person name="Prichard L.B."/>
            <person name="Reno J.M."/>
            <person name="Ericsson L.H."/>
            <person name="Nathanson N.M."/>
        </authorList>
    </citation>
    <scope>PHOSPHORYLATION AT SER-782</scope>
    <scope>MUTAGENESIS OF SER-782</scope>
    <scope>IDENTIFICATION BY MASS SPECTROMETRY</scope>
</reference>
<reference key="11">
    <citation type="journal article" date="2001" name="Eur. J. Biochem.">
        <title>Soluble gp130 is the natural inhibitor of soluble interleukin-6 receptor transsignaling responses.</title>
        <authorList>
            <person name="Jostock T."/>
            <person name="Muellberg J."/>
            <person name="Ozbek S."/>
            <person name="Atreya R."/>
            <person name="Blinn G."/>
            <person name="Voltz N."/>
            <person name="Fischer M."/>
            <person name="Neurath M.F."/>
            <person name="Rose-John S."/>
        </authorList>
    </citation>
    <scope>FUNCTION (ISOFORM 2)</scope>
    <scope>BIOTECHNOLOGY</scope>
</reference>
<reference key="12">
    <citation type="journal article" date="2001" name="J. Virol.">
        <title>Detection of direct binding of human herpesvirus 8-encoded interleukin-6 (vIL-6) to both gp130 and IL-6 receptor (IL-6R) and identification of amino acid residues of vIL-6 important for IL-6R-dependent and -independent signaling.</title>
        <authorList>
            <person name="Li H."/>
            <person name="Wang H."/>
            <person name="Nicholas J."/>
        </authorList>
    </citation>
    <scope>INTERACTION WITH HERPES VIRUS-8/HHV-8 PROTEIN VIL6 (MICROBIAL INFECTION)</scope>
</reference>
<reference key="13">
    <citation type="journal article" date="2005" name="J. Proteome Res.">
        <title>Human plasma N-glycoproteome analysis by immunoaffinity subtraction, hydrazide chemistry, and mass spectrometry.</title>
        <authorList>
            <person name="Liu T."/>
            <person name="Qian W.-J."/>
            <person name="Gritsenko M.A."/>
            <person name="Camp D.G. II"/>
            <person name="Monroe M.E."/>
            <person name="Moore R.J."/>
            <person name="Smith R.D."/>
        </authorList>
    </citation>
    <scope>GLYCOSYLATION [LARGE SCALE ANALYSIS] AT ASN-379 AND ASN-383</scope>
    <source>
        <tissue>Plasma</tissue>
    </source>
</reference>
<reference key="14">
    <citation type="journal article" date="2006" name="Cell">
        <title>Global, in vivo, and site-specific phosphorylation dynamics in signaling networks.</title>
        <authorList>
            <person name="Olsen J.V."/>
            <person name="Blagoev B."/>
            <person name="Gnad F."/>
            <person name="Macek B."/>
            <person name="Kumar C."/>
            <person name="Mortensen P."/>
            <person name="Mann M."/>
        </authorList>
    </citation>
    <scope>PHOSPHORYLATION [LARGE SCALE ANALYSIS] AT SER-829</scope>
    <scope>IDENTIFICATION BY MASS SPECTROMETRY [LARGE SCALE ANALYSIS]</scope>
    <source>
        <tissue>Cervix carcinoma</tissue>
    </source>
</reference>
<reference key="15">
    <citation type="journal article" date="2008" name="J. Proteome Res.">
        <title>Phosphoproteome of resting human platelets.</title>
        <authorList>
            <person name="Zahedi R.P."/>
            <person name="Lewandrowski U."/>
            <person name="Wiesner J."/>
            <person name="Wortelkamp S."/>
            <person name="Moebius J."/>
            <person name="Schuetz C."/>
            <person name="Walter U."/>
            <person name="Gambaryan S."/>
            <person name="Sickmann A."/>
        </authorList>
    </citation>
    <scope>PHOSPHORYLATION [LARGE SCALE ANALYSIS] AT SER-667</scope>
    <scope>IDENTIFICATION BY MASS SPECTROMETRY [LARGE SCALE ANALYSIS]</scope>
    <source>
        <tissue>Platelet</tissue>
    </source>
</reference>
<reference key="16">
    <citation type="journal article" date="2008" name="Proc. Natl. Acad. Sci. U.S.A.">
        <title>A quantitative atlas of mitotic phosphorylation.</title>
        <authorList>
            <person name="Dephoure N."/>
            <person name="Zhou C."/>
            <person name="Villen J."/>
            <person name="Beausoleil S.A."/>
            <person name="Bakalarski C.E."/>
            <person name="Elledge S.J."/>
            <person name="Gygi S.P."/>
        </authorList>
    </citation>
    <scope>IDENTIFICATION BY MASS SPECTROMETRY [LARGE SCALE ANALYSIS]</scope>
    <source>
        <tissue>Cervix carcinoma</tissue>
    </source>
</reference>
<reference key="17">
    <citation type="journal article" date="2009" name="J. Proteome Res.">
        <title>Glycoproteomics analysis of human liver tissue by combination of multiple enzyme digestion and hydrazide chemistry.</title>
        <authorList>
            <person name="Chen R."/>
            <person name="Jiang X."/>
            <person name="Sun D."/>
            <person name="Han G."/>
            <person name="Wang F."/>
            <person name="Ye M."/>
            <person name="Wang L."/>
            <person name="Zou H."/>
        </authorList>
    </citation>
    <scope>GLYCOSYLATION [LARGE SCALE ANALYSIS] AT ASN-227 AND ASN-390</scope>
    <source>
        <tissue>Liver</tissue>
    </source>
</reference>
<reference key="18">
    <citation type="journal article" date="2009" name="Mol. Biol. Cell">
        <title>Humanin inhibits neuronal cell death by interacting with a cytokine receptor complex or complexes involving CNTF receptor alpha/WSX-1/gp130.</title>
        <authorList>
            <person name="Hashimoto Y."/>
            <person name="Kurita M."/>
            <person name="Aiso S."/>
            <person name="Nishimoto I."/>
            <person name="Matsuoka M."/>
        </authorList>
    </citation>
    <scope>FUNCTION</scope>
    <scope>IDENTIFICATION IN HUMANIN RECEPTOR COMPLEX</scope>
</reference>
<reference key="19">
    <citation type="journal article" date="2009" name="Mol. Cell. Proteomics">
        <title>A strategy for precise and large scale identification of core fucosylated glycoproteins.</title>
        <authorList>
            <person name="Jia W."/>
            <person name="Lu Z."/>
            <person name="Fu Y."/>
            <person name="Wang H.P."/>
            <person name="Wang L.H."/>
            <person name="Chi H."/>
            <person name="Yuan Z.F."/>
            <person name="Zheng Z.B."/>
            <person name="Song L.N."/>
            <person name="Han H.H."/>
            <person name="Liang Y.M."/>
            <person name="Wang J.L."/>
            <person name="Cai Y."/>
            <person name="Zhang Y.K."/>
            <person name="Deng Y.L."/>
            <person name="Ying W.T."/>
            <person name="He S.M."/>
            <person name="Qian X.H."/>
        </authorList>
    </citation>
    <scope>GLYCOSYLATION AT ASN-390</scope>
</reference>
<reference key="20">
    <citation type="journal article" date="2010" name="J. Biol. Chem.">
        <title>N-linked glycosylation is essential for the stability but not the signaling function of the interleukin-6 signal transducer glycoprotein 130.</title>
        <authorList>
            <person name="Waetzig G.H."/>
            <person name="Chalaris A."/>
            <person name="Rosenstiel P."/>
            <person name="Suthaus J."/>
            <person name="Holland C."/>
            <person name="Karl N."/>
            <person name="Valles Uriarte L."/>
            <person name="Till A."/>
            <person name="Scheller J."/>
            <person name="Grotzinger J."/>
            <person name="Schreiber S."/>
            <person name="Rose-John S."/>
            <person name="Seegert D."/>
        </authorList>
    </citation>
    <scope>FUNCTION</scope>
    <scope>SUBCELLULAR LOCATION</scope>
    <scope>GLYCOSYLATION</scope>
</reference>
<reference key="21">
    <citation type="journal article" date="2010" name="Sci. Signal.">
        <title>Quantitative phosphoproteomics reveals widespread full phosphorylation site occupancy during mitosis.</title>
        <authorList>
            <person name="Olsen J.V."/>
            <person name="Vermeulen M."/>
            <person name="Santamaria A."/>
            <person name="Kumar C."/>
            <person name="Miller M.L."/>
            <person name="Jensen L.J."/>
            <person name="Gnad F."/>
            <person name="Cox J."/>
            <person name="Jensen T.S."/>
            <person name="Nigg E.A."/>
            <person name="Brunak S."/>
            <person name="Mann M."/>
        </authorList>
    </citation>
    <scope>PHOSPHORYLATION [LARGE SCALE ANALYSIS] AT SER-667</scope>
    <scope>IDENTIFICATION BY MASS SPECTROMETRY [LARGE SCALE ANALYSIS]</scope>
    <source>
        <tissue>Cervix carcinoma</tissue>
    </source>
</reference>
<reference key="22">
    <citation type="journal article" date="2011" name="J. Biol. Chem.">
        <title>Inhibition of classic signaling is a novel function of soluble glycoprotein 130 (sgp130), which is controlled by the ratio of interleukin 6 and soluble interleukin 6 receptor.</title>
        <authorList>
            <person name="Garbers C."/>
            <person name="Thaiss W."/>
            <person name="Jones G.W."/>
            <person name="Waetzig G.H."/>
            <person name="Lorenzen I."/>
            <person name="Guilhot F."/>
            <person name="Lissilaa R."/>
            <person name="Ferlin W.G."/>
            <person name="Groetzinger J."/>
            <person name="Jones S.A."/>
            <person name="Rose-John S."/>
            <person name="Scheller J."/>
        </authorList>
    </citation>
    <scope>FUNCTION (ISOFORM 2)</scope>
    <scope>BIOTECHNOLOGY</scope>
</reference>
<reference key="23">
    <citation type="journal article" date="2013" name="Biochem. J.">
        <title>gp130 activation is regulated by D2-D3 interdomain connectivity.</title>
        <authorList>
            <person name="Schutt A."/>
            <person name="Zacharias M."/>
            <person name="Schneider N."/>
            <person name="Horn S."/>
            <person name="Grotzinger J."/>
            <person name="Rose-John S."/>
            <person name="Schmidt-Arras D."/>
        </authorList>
    </citation>
    <scope>FUNCTION</scope>
    <scope>MUTAGENESIS OF CYS-172; 186-TYR--TYR-190; VAL-189; TYR-190; ASP-215 AND VAL-252</scope>
</reference>
<reference key="24">
    <citation type="journal article" date="2013" name="J. Proteome Res.">
        <title>Toward a comprehensive characterization of a human cancer cell phosphoproteome.</title>
        <authorList>
            <person name="Zhou H."/>
            <person name="Di Palma S."/>
            <person name="Preisinger C."/>
            <person name="Peng M."/>
            <person name="Polat A.N."/>
            <person name="Heck A.J."/>
            <person name="Mohammed S."/>
        </authorList>
    </citation>
    <scope>PHOSPHORYLATION [LARGE SCALE ANALYSIS] AT SER-667 AND SER-839</scope>
    <scope>IDENTIFICATION BY MASS SPECTROMETRY [LARGE SCALE ANALYSIS]</scope>
    <source>
        <tissue>Cervix carcinoma</tissue>
    </source>
</reference>
<reference key="25">
    <citation type="journal article" date="2014" name="J. Proteomics">
        <title>An enzyme assisted RP-RPLC approach for in-depth analysis of human liver phosphoproteome.</title>
        <authorList>
            <person name="Bian Y."/>
            <person name="Song C."/>
            <person name="Cheng K."/>
            <person name="Dong M."/>
            <person name="Wang F."/>
            <person name="Huang J."/>
            <person name="Sun D."/>
            <person name="Wang L."/>
            <person name="Ye M."/>
            <person name="Zou H."/>
        </authorList>
    </citation>
    <scope>PHOSPHORYLATION [LARGE SCALE ANALYSIS] AT SER-661 AND SER-667</scope>
    <scope>IDENTIFICATION BY MASS SPECTROMETRY [LARGE SCALE ANALYSIS]</scope>
    <source>
        <tissue>Liver</tissue>
    </source>
</reference>
<reference key="26">
    <citation type="journal article" date="2015" name="Nature">
        <title>A gp130-Src-YAP module links inflammation to epithelial regeneration.</title>
        <authorList>
            <person name="Taniguchi K."/>
            <person name="Wu L.W."/>
            <person name="Grivennikov S.I."/>
            <person name="de Jong P.R."/>
            <person name="Lian I."/>
            <person name="Yu F.X."/>
            <person name="Wang K."/>
            <person name="Ho S.B."/>
            <person name="Boland B.S."/>
            <person name="Chang J.T."/>
            <person name="Sandborn W.J."/>
            <person name="Hardiman G."/>
            <person name="Raz E."/>
            <person name="Maehara Y."/>
            <person name="Yoshimura A."/>
            <person name="Zucman-Rossi J."/>
            <person name="Guan K.L."/>
            <person name="Karin M."/>
        </authorList>
    </citation>
    <scope>FUNCTION</scope>
    <scope>MUTAGENESIS OF TYR-759</scope>
    <scope>INTERACTION WITH SRC AND YES</scope>
</reference>
<reference key="27">
    <citation type="journal article" date="2016" name="Cell Rep.">
        <title>Proteolytic Cleavage Governs Interleukin-11 Trans-signaling.</title>
        <authorList>
            <person name="Lokau J."/>
            <person name="Nitz R."/>
            <person name="Agthe M."/>
            <person name="Monhasery N."/>
            <person name="Aparicio-Siegmund S."/>
            <person name="Schumacher N."/>
            <person name="Wolf J."/>
            <person name="Moeller-Hackbarth K."/>
            <person name="Waetzig G.H."/>
            <person name="Groetzinger J."/>
            <person name="Mueller-Newen G."/>
            <person name="Rose-John S."/>
            <person name="Scheller J."/>
            <person name="Garbers C."/>
        </authorList>
    </citation>
    <scope>BIOTECHNOLOGY</scope>
</reference>
<reference key="28">
    <citation type="journal article" date="2016" name="J. Clin. Invest.">
        <title>Endogenous transmembrane protein UT2 inhibits pSTAT3 and suppresses hematological malignancy.</title>
        <authorList>
            <person name="Lee D."/>
            <person name="Wang Y.H."/>
            <person name="Kalaitzidis D."/>
            <person name="Ramachandran J."/>
            <person name="Eda H."/>
            <person name="Sykes D.B."/>
            <person name="Raje N."/>
            <person name="Scadden D.T."/>
        </authorList>
    </citation>
    <scope>INTERACTION WITH ARMH4</scope>
</reference>
<reference key="29">
    <citation type="journal article" date="2018" name="Sci. Signal.">
        <title>Soluble gp130 prevents interleukin-6 and interleukin-11 cluster signaling but not intracellular autocrine responses.</title>
        <authorList>
            <person name="Lamertz L."/>
            <person name="Rummel F."/>
            <person name="Polz R."/>
            <person name="Baran P."/>
            <person name="Hansen S."/>
            <person name="Waetzig G.H."/>
            <person name="Moll J.M."/>
            <person name="Floss D.M."/>
            <person name="Scheller J."/>
        </authorList>
    </citation>
    <scope>FUNCTION (ISOFORM 2)</scope>
    <scope>BIOTECHNOLOGY</scope>
</reference>
<reference key="30">
    <citation type="journal article" date="1998" name="EMBO J.">
        <title>Crystal structure of a cytokine-binding region of gp130.</title>
        <authorList>
            <person name="Bravo J."/>
            <person name="Staunton D."/>
            <person name="Heath J.K."/>
            <person name="Jones E.Y."/>
        </authorList>
    </citation>
    <scope>X-RAY CRYSTALLOGRAPHY (2.0 ANGSTROMS) OF 122-325</scope>
</reference>
<reference key="31">
    <citation type="journal article" date="2001" name="Science">
        <title>Structure of an extracellular gp130 cytokine receptor signaling complex.</title>
        <authorList>
            <person name="Chow D.-C."/>
            <person name="He X.-L."/>
            <person name="Snow A.L."/>
            <person name="Rose-John S."/>
            <person name="Garcia K.C."/>
        </authorList>
    </citation>
    <scope>X-RAY CRYSTALLOGRAPHY (2.4 ANGSTROMS) OF 23-325 IN COMPLEX WITH HERPES VIRUS-8/HHV-8 PROTEIN VIL6 (MICROBIAL INFECTION)</scope>
    <scope>SUBUNIT</scope>
    <scope>GLYCOSYLATION</scope>
</reference>
<reference key="32">
    <citation type="journal article" date="2003" name="Mol. Cell">
        <title>Convergent mechanisms for recognition of divergent cytokines by the shared signaling receptor gp130.</title>
        <authorList>
            <person name="Boulanger M.J."/>
            <person name="Bankovich A.J."/>
            <person name="Kortemme T."/>
            <person name="Baker D."/>
            <person name="Garcia K.C."/>
        </authorList>
    </citation>
    <scope>X-RAY CRYSTALLOGRAPHY (2.5 ANGSTROMS) OF 123-323 IN COMPLEX WITH LIF</scope>
</reference>
<reference evidence="42" key="33">
    <citation type="journal article" date="2003" name="Science">
        <title>Hexameric structure and assembly of the interleukin-6/IL-6 alpha-receptor/gp130 complex.</title>
        <authorList>
            <person name="Boulanger M.J."/>
            <person name="Chow D.C."/>
            <person name="Brevnova E.E."/>
            <person name="Garcia K.C."/>
        </authorList>
    </citation>
    <scope>X-RAY CRYSTALLOGRAPHY (3.65 ANGSTROMS) OF 23-321 IN COMPLEX WITH IL6 AND IL6R</scope>
    <scope>SUBUNIT</scope>
</reference>
<reference key="34">
    <citation type="journal article" date="2010" name="J. Biol. Chem.">
        <title>Crystal structure of the entire ectodomain of gp130: insights into the molecular assembly of the tall cytokine receptor complexes.</title>
        <authorList>
            <person name="Xu Y."/>
            <person name="Kershaw N.J."/>
            <person name="Luo C.S."/>
            <person name="Soo P."/>
            <person name="Pocock M.J."/>
            <person name="Czabotar P.E."/>
            <person name="Hilton D.J."/>
            <person name="Nicola N.A."/>
            <person name="Garrett T.P."/>
            <person name="Zhang J.G."/>
        </authorList>
    </citation>
    <scope>X-RAY CRYSTALLOGRAPHY (1.9 ANGSTROMS) OF 24-612</scope>
    <scope>DISULFIDE BONDS</scope>
    <scope>GLYCOSYLATION AT ASN-43; ASN-83; ASN-227; ASN-383 AND ASN-553</scope>
</reference>
<reference key="35">
    <citation type="journal article" date="2006" name="Science">
        <title>The consensus coding sequences of human breast and colorectal cancers.</title>
        <authorList>
            <person name="Sjoeblom T."/>
            <person name="Jones S."/>
            <person name="Wood L.D."/>
            <person name="Parsons D.W."/>
            <person name="Lin J."/>
            <person name="Barber T.D."/>
            <person name="Mandelker D."/>
            <person name="Leary R.J."/>
            <person name="Ptak J."/>
            <person name="Silliman N."/>
            <person name="Szabo S."/>
            <person name="Buckhaults P."/>
            <person name="Farrell C."/>
            <person name="Meeh P."/>
            <person name="Markowitz S.D."/>
            <person name="Willis J."/>
            <person name="Dawson D."/>
            <person name="Willson J.K.V."/>
            <person name="Gazdar A.F."/>
            <person name="Hartigan J."/>
            <person name="Wu L."/>
            <person name="Liu C."/>
            <person name="Parmigiani G."/>
            <person name="Park B.H."/>
            <person name="Bachman K.E."/>
            <person name="Papadopoulos N."/>
            <person name="Vogelstein B."/>
            <person name="Kinzler K.W."/>
            <person name="Velculescu V.E."/>
        </authorList>
    </citation>
    <scope>VARIANT [LARGE SCALE ANALYSIS] ILE-415</scope>
</reference>
<reference key="36">
    <citation type="journal article" date="2014" name="Cancer Genet.">
        <title>Low incidence of IL6ST (gp130) mutations in exon 6 in lung cancer of a Chinese cohort.</title>
        <authorList>
            <person name="Sun L."/>
            <person name="Sui L."/>
            <person name="Cong X."/>
            <person name="Ma K."/>
            <person name="Ma X."/>
            <person name="Huang Y."/>
            <person name="Fan C."/>
            <person name="Fu X."/>
            <person name="Ma K."/>
        </authorList>
    </citation>
    <scope>VARIANT GLY-200</scope>
</reference>
<reference key="37">
    <citation type="journal article" date="2014" name="Metabolism">
        <title>Glycoprotein 130 polymorphism predicts soluble glycoprotein 130 levels.</title>
        <authorList>
            <person name="Wonnerth A."/>
            <person name="Katsaros K.M."/>
            <person name="Krychtiuk K.A."/>
            <person name="Speidl W.S."/>
            <person name="Kaun C."/>
            <person name="Thaler K."/>
            <person name="Huber K."/>
            <person name="Wojta J."/>
            <person name="Maurer G."/>
            <person name="Seljeflot I."/>
            <person name="Arnesen H."/>
            <person name="Weiss T.W."/>
        </authorList>
    </citation>
    <scope>VARIANT ARG-148</scope>
    <scope>SUBCELLULAR LOCATION</scope>
    <scope>TISSUE SPECIFICITY</scope>
</reference>
<reference key="38">
    <citation type="journal article" date="2017" name="J. Exp. Med.">
        <title>A biallelic mutation in IL6ST encoding the GP130 co-receptor causes immunodeficiency and craniosynostosis.</title>
        <authorList>
            <person name="Schwerd T."/>
            <person name="Twigg S.R.F."/>
            <person name="Aschenbrenner D."/>
            <person name="Manrique S."/>
            <person name="Miller K.A."/>
            <person name="Taylor I.B."/>
            <person name="Capitani M."/>
            <person name="McGowan S.J."/>
            <person name="Sweeney E."/>
            <person name="Weber A."/>
            <person name="Chen L."/>
            <person name="Bowness P."/>
            <person name="Riordan A."/>
            <person name="Cant A."/>
            <person name="Freeman A.F."/>
            <person name="Milner J.D."/>
            <person name="Holland S.M."/>
            <person name="Frede N."/>
            <person name="Mueller M."/>
            <person name="Schmidt-Arras D."/>
            <person name="Grimbacher B."/>
            <person name="Wall S.A."/>
            <person name="Jones E.Y."/>
            <person name="Wilkie A.O.M."/>
            <person name="Uhlig H.H."/>
        </authorList>
    </citation>
    <scope>VARIANT HIES4B TYR-404</scope>
    <scope>INVOLVEMENT IN HIES4B</scope>
    <scope>FUNCTION</scope>
    <scope>CHARACTERIZATION OF VARIANT HIES4B TYR-404</scope>
</reference>
<reference key="39">
    <citation type="journal article" date="2019" name="Haematologica">
        <title>Selective loss of function variants in IL6ST cause Hyper-IgE syndrome with distinct impairments of T-cell phenotype and function.</title>
        <authorList>
            <person name="Shahin T."/>
            <person name="Aschenbrenner D."/>
            <person name="Cagdas D."/>
            <person name="Bal S.K."/>
            <person name="Conde C.D."/>
            <person name="Garncarz W."/>
            <person name="Medgyesi D."/>
            <person name="Schwerd T."/>
            <person name="Karaatmaca B."/>
            <person name="Cetinkaya P.G."/>
            <person name="Esenboga S."/>
            <person name="Twigg S.R.F."/>
            <person name="Cant A."/>
            <person name="Wilkie A.O.M."/>
            <person name="Tezcan I."/>
            <person name="Uhlig H.H."/>
            <person name="Boztug K."/>
        </authorList>
    </citation>
    <scope>VARIANT HIES4B LEU-498</scope>
    <scope>INVOLVEMENT IN HIES4B</scope>
    <scope>FUNCTION</scope>
    <scope>CHARACTERIZATION OF VARIANT HIES4B LEU-498</scope>
</reference>
<reference key="40">
    <citation type="journal article" date="2020" name="J. Exp. Med.">
        <title>Absence of GP130 cytokine receptor signaling causes extended Stueve-Wiedemann syndrome.</title>
        <authorList>
            <person name="Chen Y.H."/>
            <person name="Grigelioniene G."/>
            <person name="Newton P.T."/>
            <person name="Gullander J."/>
            <person name="Elfving M."/>
            <person name="Hammarsjoe A."/>
            <person name="Batkovskyte D."/>
            <person name="Alsaif H.S."/>
            <person name="Kurdi W.I.Y."/>
            <person name="Abdulwahab F."/>
            <person name="Shanmugasundaram V."/>
            <person name="Devey L."/>
            <person name="Bacrot S."/>
            <person name="Brodszki J."/>
            <person name="Huber C."/>
            <person name="Hamel B."/>
            <person name="Gisselsson D."/>
            <person name="Papadogiannakis N."/>
            <person name="Jedrycha K."/>
            <person name="Guertl-Lackner B."/>
            <person name="Chagin A.S."/>
            <person name="Nishimura G."/>
            <person name="Aschenbrenner D."/>
            <person name="Alkuraya F.S."/>
            <person name="Laurence A."/>
            <person name="Cormier-Daire V."/>
            <person name="Uhlig H.H."/>
        </authorList>
    </citation>
    <scope>VARIANT STWS2 281-ARG--GLN-918 DEL</scope>
    <scope>INVOLVEMENT IN STWS2</scope>
    <scope>CHARACTERIZATION OF VARIANT STWS2 281-ARG--GLN-918 DEL</scope>
</reference>
<reference key="41">
    <citation type="journal article" date="2020" name="J. Exp. Med.">
        <title>Dominant-negative mutations in human IL6ST underlie hyper-IgE syndrome.</title>
        <authorList>
            <consortium name="Undiagnosed Diseases Network"/>
            <person name="Beziat V."/>
            <person name="Tavernier S.J."/>
            <person name="Chen Y.H."/>
            <person name="Ma C.S."/>
            <person name="Materna M."/>
            <person name="Laurence A."/>
            <person name="Staal J."/>
            <person name="Aschenbrenner D."/>
            <person name="Roels L."/>
            <person name="Worley L."/>
            <person name="Claes K."/>
            <person name="Gartner L."/>
            <person name="Kohn L.A."/>
            <person name="De Bruyne M."/>
            <person name="Schmitz-Abe K."/>
            <person name="Charbonnier L.M."/>
            <person name="Keles S."/>
            <person name="Nammour J."/>
            <person name="Vladikine N."/>
            <person name="Maglorius Renkilaraj M.R.L."/>
            <person name="Seeleuthner Y."/>
            <person name="Migaud M."/>
            <person name="Rosain J."/>
            <person name="Jeljeli M."/>
            <person name="Boisson B."/>
            <person name="Van Braeckel E."/>
            <person name="Rosenfeld J.A."/>
            <person name="Dai H."/>
            <person name="Burrage L.C."/>
            <person name="Murdock D.R."/>
            <person name="Lambrecht B.N."/>
            <person name="Avettand-Fenoel V."/>
            <person name="Vogel T.P."/>
            <person name="Esther C.R."/>
            <person name="Haskologlu S."/>
            <person name="Dogu F."/>
            <person name="Ciznar P."/>
            <person name="Boutboul D."/>
            <person name="Ouachee-Chardin M."/>
            <person name="Amourette J."/>
            <person name="Lebras M.N."/>
            <person name="Gauvain C."/>
            <person name="Tcherakian C."/>
            <person name="Ikinciogullari A."/>
            <person name="Beyaert R."/>
            <person name="Abel L."/>
            <person name="Milner J.D."/>
            <person name="Grimbacher B."/>
            <person name="Couderc L.J."/>
            <person name="Butte M.J."/>
            <person name="Freeman A.F."/>
            <person name="Catherinot E."/>
            <person name="Fieschi C."/>
            <person name="Chatila T.A."/>
            <person name="Tangye S.G."/>
            <person name="Uhlig H.H."/>
            <person name="Haerynck F."/>
            <person name="Casanova J.L."/>
            <person name="Puel A."/>
        </authorList>
    </citation>
    <scope>VARIANTS HIES4A 733-CYS--GLN-918 DEL; 754-SER--GLN-918 DEL AND 759-TYR--GLN-918 DEL</scope>
    <scope>CHARACTERIZATION OF VARIANTS HIES4A 733-CYS--GLN-918 DEL; 754-SER--GLN-918 DEL AND 759-TYR--GLN-918 DEL</scope>
    <scope>MUTAGENESIS OF 789-SER--GLN-918 AND 899-GLU--GLN-918</scope>
</reference>
<reference key="42">
    <citation type="journal article" date="2021" name="Hum. Mol. Genet.">
        <title>Mosaic IL6ST variant inducing constitutive GP130 cytokine receptor signaling as a cause of neonatal onset immunodeficiency with autoinflammation and dysmorphy.</title>
        <authorList>
            <person name="Materna-Kiryluk A."/>
            <person name="Pollak A."/>
            <person name="Gawalski K."/>
            <person name="Szczawinska-Poplonyk A."/>
            <person name="Rydzynska Z."/>
            <person name="Sosnowska A."/>
            <person name="Cukrowska B."/>
            <person name="Gasperowicz P."/>
            <person name="Konopka E."/>
            <person name="Pietrucha B."/>
            <person name="Grzywa T.M."/>
            <person name="Banaszak-Ziemska M."/>
            <person name="Niedziela M."/>
            <person name="Skalska-Sadowska J."/>
            <person name="Stawinski P."/>
            <person name="Sladowski D."/>
            <person name="Nowis D."/>
            <person name="Ploski R."/>
        </authorList>
    </citation>
    <scope>VARIANT IMD94 187-SER--TYR-190 DEL</scope>
    <scope>CHARACTERIZATION OF VARIANT IMD94 187-SER--TYR-190 DEL</scope>
    <scope>INVOLVEMENT IN IMD94</scope>
</reference>
<reference key="43">
    <citation type="journal article" date="2021" name="J. Allergy Clin. Immunol.">
        <title>Functional and structural analysis of cytokine-selective IL6ST defects that cause recessive hyper-IgE syndrome.</title>
        <authorList>
            <consortium name="Undiagnosed Diseases Network"/>
            <person name="Chen Y.H."/>
            <person name="Zastrow D.B."/>
            <person name="Metcalfe R.D."/>
            <person name="Gartner L."/>
            <person name="Krause F."/>
            <person name="Morton C.J."/>
            <person name="Marwaha S."/>
            <person name="Fresard L."/>
            <person name="Huang Y."/>
            <person name="Zhao C."/>
            <person name="McCormack C."/>
            <person name="Bick D."/>
            <person name="Worthey E.A."/>
            <person name="Eng C.M."/>
            <person name="Gold J."/>
            <person name="Montgomery S.B."/>
            <person name="Fisher P.G."/>
            <person name="Ashley E.A."/>
            <person name="Wheeler M.T."/>
            <person name="Parker M.W."/>
            <person name="Shanmugasundaram V."/>
            <person name="Putoczki T.L."/>
            <person name="Schmidt-Arras D."/>
            <person name="Laurence A."/>
            <person name="Bernstein J.A."/>
            <person name="Griffin M.D.W."/>
            <person name="Uhlig H.H."/>
        </authorList>
    </citation>
    <scope>VARIANT HIES4B PRO-517</scope>
    <scope>CHARACTERIZATION OF VARIANT HIES4B PRO-517</scope>
</reference>
<proteinExistence type="evidence at protein level"/>
<evidence type="ECO:0000250" key="1">
    <source>
        <dbReference type="UniProtKB" id="Q00560"/>
    </source>
</evidence>
<evidence type="ECO:0000255" key="2"/>
<evidence type="ECO:0000255" key="3">
    <source>
        <dbReference type="PROSITE-ProRule" id="PRU00316"/>
    </source>
</evidence>
<evidence type="ECO:0000256" key="4">
    <source>
        <dbReference type="SAM" id="MobiDB-lite"/>
    </source>
</evidence>
<evidence type="ECO:0000269" key="5">
    <source>
    </source>
</evidence>
<evidence type="ECO:0000269" key="6">
    <source>
    </source>
</evidence>
<evidence type="ECO:0000269" key="7">
    <source>
    </source>
</evidence>
<evidence type="ECO:0000269" key="8">
    <source>
    </source>
</evidence>
<evidence type="ECO:0000269" key="9">
    <source>
    </source>
</evidence>
<evidence type="ECO:0000269" key="10">
    <source>
    </source>
</evidence>
<evidence type="ECO:0000269" key="11">
    <source>
    </source>
</evidence>
<evidence type="ECO:0000269" key="12">
    <source>
    </source>
</evidence>
<evidence type="ECO:0000269" key="13">
    <source>
    </source>
</evidence>
<evidence type="ECO:0000269" key="14">
    <source>
    </source>
</evidence>
<evidence type="ECO:0000269" key="15">
    <source>
    </source>
</evidence>
<evidence type="ECO:0000269" key="16">
    <source>
    </source>
</evidence>
<evidence type="ECO:0000269" key="17">
    <source>
    </source>
</evidence>
<evidence type="ECO:0000269" key="18">
    <source>
    </source>
</evidence>
<evidence type="ECO:0000269" key="19">
    <source>
    </source>
</evidence>
<evidence type="ECO:0000269" key="20">
    <source>
    </source>
</evidence>
<evidence type="ECO:0000269" key="21">
    <source>
    </source>
</evidence>
<evidence type="ECO:0000269" key="22">
    <source>
    </source>
</evidence>
<evidence type="ECO:0000269" key="23">
    <source>
    </source>
</evidence>
<evidence type="ECO:0000269" key="24">
    <source>
    </source>
</evidence>
<evidence type="ECO:0000269" key="25">
    <source>
    </source>
</evidence>
<evidence type="ECO:0000269" key="26">
    <source>
    </source>
</evidence>
<evidence type="ECO:0000269" key="27">
    <source>
    </source>
</evidence>
<evidence type="ECO:0000269" key="28">
    <source>
    </source>
</evidence>
<evidence type="ECO:0000269" key="29">
    <source>
    </source>
</evidence>
<evidence type="ECO:0000269" key="30">
    <source>
    </source>
</evidence>
<evidence type="ECO:0000269" key="31">
    <source>
    </source>
</evidence>
<evidence type="ECO:0000269" key="32">
    <source>
    </source>
</evidence>
<evidence type="ECO:0000269" key="33">
    <source>
    </source>
</evidence>
<evidence type="ECO:0000269" key="34">
    <source>
    </source>
</evidence>
<evidence type="ECO:0000269" key="35">
    <source>
    </source>
</evidence>
<evidence type="ECO:0000269" key="36">
    <source>
    </source>
</evidence>
<evidence type="ECO:0000303" key="37">
    <source>
    </source>
</evidence>
<evidence type="ECO:0000303" key="38">
    <source>
    </source>
</evidence>
<evidence type="ECO:0000303" key="39">
    <source ref="3"/>
</evidence>
<evidence type="ECO:0000305" key="40"/>
<evidence type="ECO:0000312" key="41">
    <source>
        <dbReference type="HGNC" id="HGNC:6021"/>
    </source>
</evidence>
<evidence type="ECO:0007744" key="42">
    <source>
        <dbReference type="PDB" id="1P9M"/>
    </source>
</evidence>
<evidence type="ECO:0007744" key="43">
    <source>
    </source>
</evidence>
<evidence type="ECO:0007744" key="44">
    <source>
    </source>
</evidence>
<evidence type="ECO:0007744" key="45">
    <source>
    </source>
</evidence>
<evidence type="ECO:0007744" key="46">
    <source>
    </source>
</evidence>
<evidence type="ECO:0007744" key="47">
    <source>
    </source>
</evidence>
<evidence type="ECO:0007829" key="48">
    <source>
        <dbReference type="PDB" id="1BQU"/>
    </source>
</evidence>
<evidence type="ECO:0007829" key="49">
    <source>
        <dbReference type="PDB" id="1I1R"/>
    </source>
</evidence>
<evidence type="ECO:0007829" key="50">
    <source>
        <dbReference type="PDB" id="1PVH"/>
    </source>
</evidence>
<evidence type="ECO:0007829" key="51">
    <source>
        <dbReference type="PDB" id="3L5I"/>
    </source>
</evidence>
<evidence type="ECO:0007829" key="52">
    <source>
        <dbReference type="PDB" id="7U7N"/>
    </source>
</evidence>
<evidence type="ECO:0007829" key="53">
    <source>
        <dbReference type="PDB" id="8D74"/>
    </source>
</evidence>
<evidence type="ECO:0007829" key="54">
    <source>
        <dbReference type="PDB" id="8D82"/>
    </source>
</evidence>
<name>IL6RB_HUMAN</name>
<accession>P40189</accession>
<accession>A0N0L4</accession>
<accession>Q5FC04</accession>
<accession>Q9UQ41</accession>
<gene>
    <name evidence="41" type="primary">IL6ST</name>
</gene>
<sequence>MLTLQTWLVQALFIFLTTESTGELLDPCGYISPESPVVQLHSNFTAVCVLKEKCMDYFHVNANYIVWKTNHFTIPKEQYTIINRTASSVTFTDIASLNIQLTCNILTFGQLEQNVYGITIISGLPPEKPKNLSCIVNEGKKMRCEWDGGRETHLETNFTLKSEWATHKFADCKAKRDTPTSCTVDYSTVYFVNIEVWVEAENALGKVTSDHINFDPVYKVKPNPPHNLSVINSEELSSILKLTWTNPSIKSVIILKYNIQYRTKDASTWSQIPPEDTASTRSSFTVQDLKPFTEYVFRIRCMKEDGKGYWSDWSEEASGITYEDRPSKAPSFWYKIDPSHTQGYRTVQLVWKTLPPFEANGKILDYEVTLTRWKSHLQNYTVNATKLTVNLTNDRYLATLTVRNLVGKSDAAVLTIPACDFQATHPVMDLKAFPKDNMLWVEWTTPRESVKKYILEWCVLSDKAPCITDWQQEDGTVHRTYLRGNLAESKCYLITVTPVYADGPGSPESIKAYLKQAPPSKGPTVRTKKVGKNEAVLEWDQLPVDVQNGFIRNYTIFYRTIIGNETAVNVDSSHTEYTLSSLTSDTLYMVRMAAYTDEGGKDGPEFTFTTPKFAQGEIEAIVVPVCLAFLLTTLLGVLFCFNKRDLIKKHIWPNVPDPSKSHIAQWSPHTPPRHNFNSKDQMYSDGNFTDVSVVEIEANDKKPFPEDLKSLDLFKKEKINTEGHSSGIGGSSCMSSSRPSISSSDENESSQNTSSTVQYSTVVHSGYRHQVPSVQVFSRSESTQPLLDSEERPEDLQLVDHVDGGDGILPRQQYFKQNCSQHESSPDISHFERSKQVSSVNEEDFVRLKQQISDHISQSCGSGQMKMFQEVSAADAFGPGTEGQVERFETVGMEAATDEGMPKSYLPQTVRQGGYMPQ</sequence>
<comment type="function">
    <text evidence="1 17 18 21 22 25 28 30">Signal-transducing molecule (PubMed:2261637). The receptor systems for IL6, LIF, OSM, CNTF, IL11, CTF1 and BSF3 can utilize IL6ST for initiating signal transmission. Binding of IL6 to IL6R induces IL6ST homodimerization and formation of a high-affinity receptor complex, which activates the intracellular JAK-MAPK and JAK-STAT3 signaling pathways (PubMed:19915009, PubMed:2261637, PubMed:23294003). That causes phosphorylation of IL6ST tyrosine residues which in turn activates STAT3 (PubMed:19915009, PubMed:23294003, PubMed:25731159). In parallel, the IL6 signaling pathway induces the expression of two cytokine receptor signaling inhibitors, SOCS1 and SOCS3, which inhibit JAK and terminate the activity of the IL6 signaling pathway as a negative feedback loop (By similarity). Also activates the yes-associated protein 1 (YAP) and NOTCH pathways to control inflammation-induced epithelial regeneration, independently of STAT3 (By similarity). Acts as a receptor for the neuroprotective peptide humanin as part of a complex with IL27RA/WSX1 and CNTFR (PubMed:19386761). Mediates signals which regulate immune response, hematopoiesis, pain control and bone metabolism (By similarity). Has a role in embryonic development (By similarity). Essential for survival of motor and sensory neurons and for differentiation of astrocytes (By similarity). Required for expression of TRPA1 in nociceptive neurons (By similarity). Required for the maintenance of PTH1R expression in the osteoblast lineage and for the stimulation of PTH-induced osteoblast differentiation (By similarity). Required for normal trabecular bone mass and cortical bone composition (By similarity).</text>
</comment>
<comment type="function">
    <molecule>Isoform 2</molecule>
    <text evidence="8 20 29">Binds to the soluble IL6:sIL6R complex (hyper-IL6), thereby blocking IL6 trans-signaling. Inhibits sIL6R-dependent acute phase response (PubMed:11121117, PubMed:21990364, PubMed:30279168). Also blocks IL11 cluster signaling through IL11R (PubMed:30279168).</text>
</comment>
<comment type="subunit">
    <text evidence="1 11 12 17 21 25 27 35 36">Component of a hexamer of two molecules each of IL6, IL6R and IL6ST; associates with the complex IL6:IL6R but does not interact with IL6 (PubMed:12829785, PubMed:2261637). Forms heterodimers composed of LIFR and IL6ST (type I OSM receptor) which are activated by LIF and OSM (PubMed:8999038). Also forms heterodimers composed of OSMR and IL6ST (type II receptor) which are activated by OSM but not by LIF (PubMed:8999038). Component of a receptor complex composed of IL6ST/GP130, IL27RA/WSX1 and CNTFR which interacts with the neuroprotective peptide humanin (PubMed:19386761). Interacts with HCK (PubMed:9406996). Interacts with INPP5D/SHIP1 (By similarity). Interacts with SRC and YES (PubMed:25731159). Interacts with ARMH4; this interaction prevents IL6ST protein homodimerization and bridges ARMH4 with IL6R and STAT3 and therefore inhibits phosphorylation of STAT3 at 'Tyr-705' (PubMed:26927669).</text>
</comment>
<comment type="subunit">
    <text evidence="9 10">(Microbial infection) The homodimer binds two molecules of herpes virus 8/HHV-8 protein vIL-6.</text>
</comment>
<comment type="interaction">
    <interactant intactId="EBI-1030834">
        <id>P40189</id>
    </interactant>
    <interactant intactId="EBI-1050897">
        <id>P26441</id>
        <label>CNTF</label>
    </interactant>
    <organismsDiffer>false</organismsDiffer>
    <experiments>10</experiments>
</comment>
<comment type="interaction">
    <interactant intactId="EBI-1030834">
        <id>P40189</id>
    </interactant>
    <interactant intactId="EBI-1030834">
        <id>P40189</id>
        <label>IL6ST</label>
    </interactant>
    <organismsDiffer>false</organismsDiffer>
    <experiments>2</experiments>
</comment>
<comment type="interaction">
    <interactant intactId="EBI-1030834">
        <id>P40189</id>
    </interactant>
    <interactant intactId="EBI-22452746">
        <id>Q9NZI2-2</id>
        <label>KCNIP1</label>
    </interactant>
    <organismsDiffer>false</organismsDiffer>
    <experiments>3</experiments>
</comment>
<comment type="interaction">
    <interactant intactId="EBI-1030834">
        <id>P40189</id>
    </interactant>
    <interactant intactId="EBI-751501">
        <id>Q9Y2W7</id>
        <label>KCNIP3</label>
    </interactant>
    <organismsDiffer>false</organismsDiffer>
    <experiments>7</experiments>
</comment>
<comment type="interaction">
    <interactant intactId="EBI-1030834">
        <id>P40189</id>
    </interactant>
    <interactant intactId="EBI-1037189">
        <id>P15018</id>
        <label>LIF</label>
    </interactant>
    <organismsDiffer>false</organismsDiffer>
    <experiments>2</experiments>
</comment>
<comment type="interaction">
    <interactant intactId="EBI-1030834">
        <id>P40189</id>
    </interactant>
    <interactant intactId="EBI-739552">
        <id>P43364</id>
        <label>MAGEA11</label>
    </interactant>
    <organismsDiffer>false</organismsDiffer>
    <experiments>3</experiments>
</comment>
<comment type="interaction">
    <interactant intactId="EBI-1030834">
        <id>P40189</id>
    </interactant>
    <interactant intactId="EBI-6595724">
        <id>P13725</id>
        <label>OSM</label>
    </interactant>
    <organismsDiffer>false</organismsDiffer>
    <experiments>4</experiments>
</comment>
<comment type="interaction">
    <interactant intactId="EBI-1030834">
        <id>P40189</id>
    </interactant>
    <interactant intactId="EBI-2804080">
        <id>Q99650</id>
        <label>OSMR</label>
    </interactant>
    <organismsDiffer>false</organismsDiffer>
    <experiments>2</experiments>
</comment>
<comment type="interaction">
    <interactant intactId="EBI-1030834">
        <id>P40189</id>
    </interactant>
    <interactant intactId="EBI-347996">
        <id>O43765</id>
        <label>SGTA</label>
    </interactant>
    <organismsDiffer>false</organismsDiffer>
    <experiments>3</experiments>
</comment>
<comment type="interaction">
    <interactant intactId="EBI-1030834">
        <id>P40189</id>
    </interactant>
    <interactant intactId="EBI-744081">
        <id>Q96EQ0</id>
        <label>SGTB</label>
    </interactant>
    <organismsDiffer>false</organismsDiffer>
    <experiments>4</experiments>
</comment>
<comment type="interaction">
    <interactant intactId="EBI-1030834">
        <id>P40189</id>
    </interactant>
    <interactant intactId="EBI-9007403">
        <id>Q2HRC7</id>
        <label>K2</label>
    </interactant>
    <organismsDiffer>true</organismsDiffer>
    <experiments>2</experiments>
</comment>
<comment type="interaction">
    <interactant intactId="EBI-1030834">
        <id>P40189</id>
    </interactant>
    <interactant intactId="EBI-602878">
        <id>P42227</id>
        <label>Stat3</label>
    </interactant>
    <organismsDiffer>true</organismsDiffer>
    <experiments>4</experiments>
</comment>
<comment type="interaction">
    <interactant intactId="EBI-15742214">
        <id>P40189-1</id>
    </interactant>
    <interactant intactId="EBI-1383438">
        <id>P23458</id>
        <label>JAK1</label>
    </interactant>
    <organismsDiffer>false</organismsDiffer>
    <experiments>3</experiments>
</comment>
<comment type="subcellular location">
    <molecule>Isoform 1</molecule>
    <subcellularLocation>
        <location evidence="18">Cell membrane</location>
        <topology evidence="2">Single-pass type I membrane protein</topology>
    </subcellularLocation>
</comment>
<comment type="subcellular location">
    <molecule>Isoform 2</molecule>
    <subcellularLocation>
        <location evidence="23">Secreted</location>
    </subcellularLocation>
</comment>
<comment type="alternative products">
    <event type="alternative splicing"/>
    <isoform>
        <id>P40189-1</id>
        <name>1</name>
        <sequence type="displayed"/>
    </isoform>
    <isoform>
        <id>P40189-2</id>
        <name>2</name>
        <name evidence="37">GP130-RAPS</name>
        <sequence type="described" ref="VSP_001684 VSP_001685"/>
    </isoform>
    <isoform>
        <id>P40189-3</id>
        <name>3</name>
        <sequence type="described" ref="VSP_043716"/>
    </isoform>
</comment>
<comment type="tissue specificity">
    <text evidence="21">Found in all the tissues and cell lines examined (PubMed:2261637). Expression not restricted to IL6 responsive cells (PubMed:2261637).</text>
</comment>
<comment type="tissue specificity">
    <molecule>Isoform 2</molecule>
    <text evidence="23">Expressed in blood serum (at protein level) (PubMed:24629561).</text>
</comment>
<comment type="induction">
    <text evidence="35">LIF and OSM activate the type I OSM receptor while only OSM can activate the type II OSM receptor.</text>
</comment>
<comment type="domain">
    <text>The WSXWS motif appears to be necessary for proper protein folding and thereby efficient intracellular transport and cell-surface receptor binding.</text>
</comment>
<comment type="domain">
    <text>The box 1 motif is required for JAK interaction and/or activation.</text>
</comment>
<comment type="PTM">
    <text evidence="5">Phosphorylation of Ser-782 down-regulates cell surface expression.</text>
</comment>
<comment type="PTM">
    <text evidence="7 10 13 15 16 18">Heavily N-glycosylated (PubMed:11098061, PubMed:11251120, PubMed:16335952, PubMed:19139490, PubMed:19159218). Glycosylation is required for protein stability and localization in plasma membrane but not for ligand binding (PubMed:19915009).</text>
</comment>
<comment type="disease" evidence="32">
    <disease id="DI-06348">
        <name>Hyper-IgE syndrome 4A, autosomal dominant, with recurrent infections</name>
        <acronym>HIES4A</acronym>
        <description>An immunologic disorder characterized by recurrent mainly sino-pulmonary infections associated with increased serum IgE. Some patients have onset of symptoms in early childhood and develop complications, including bronchiectasis or hemoptysis, whereas others have later onset of less severe infections. Immunologic workup usually shows normal leukocyte levels, although some patients may demonstrate alterations in lymphocyte subsets, including T cells. Affected individuals also have variable skeletal abnormalities, including high-arched palate, hyperextensible joints, scoliosis, and bone fractures.</description>
        <dbReference type="MIM" id="619752"/>
    </disease>
    <text>The disease is caused by variants affecting the gene represented in this entry.</text>
</comment>
<comment type="disease" evidence="28 30 34">
    <disease id="DI-05628">
        <name>Hyper-IgE syndrome 4B, autosomal recessive, with recurrent infections</name>
        <acronym>HIES4B</acronym>
        <description>An immunologic disorder characterized by recurrent infections, mainly affecting the respiratory tract, skin and eye, and skeletal abnormalities including craniosynostosis and scoliosis. Immunologic workup shows increased serum IgE, intermittent eosinophilia, impaired development of certain B- and T-cell populations, as well as impaired acute-phase response. Disease onset is in early childhood.</description>
        <dbReference type="MIM" id="618523"/>
    </disease>
    <text>The disease is caused by variants affecting the gene represented in this entry.</text>
</comment>
<comment type="disease" evidence="31">
    <disease id="DI-06347">
        <name>Stuve-Wiedemann syndrome 2</name>
        <acronym>STWS2</acronym>
        <description>A form of Stuve-Wiedemann syndrome, an autosomal recessive disease characterized by bowing of tubular bones and other skeletal and craniofacial abnormalities, respiratory distress, feeding difficulties, and hyperthermic episodes. Most patients do not survive past infancy. STWS2 patients manifest skeletal dysplasia and neonatal lung dysfunction with additional features such as congenital thrombocytopenia, eczematoid dermatitis, renal abnormalities, and defective acute-phase response.</description>
        <dbReference type="MIM" id="619751"/>
    </disease>
    <text>The disease is caused by variants affecting the gene represented in this entry.</text>
</comment>
<comment type="disease" evidence="33">
    <disease id="DI-06346">
        <name>Immunodeficiency 94 with autoinflammation and dysmorphic facies</name>
        <acronym>IMD94</acronym>
        <description>An autosomal dominant disorder characterized by onset in early infancy, lymphadenopathy, autoinflammation, immunodeficiency with hypogammaglobulinemia, and dysmorphic facial features.</description>
        <dbReference type="MIM" id="619750"/>
    </disease>
    <text>The disease may be caused by variants affecting the gene represented in this entry.</text>
</comment>
<comment type="biotechnology">
    <text evidence="8 20 26 29">Two extracellular parts of IL6ST/gp130 linked to the Fc-portions of a human IgG1 antibody (sgp130Fc) inhibit IL6 trans-signaling by the IL6:IL6R complex and has no affinity of IL6 or IL6R alone (PubMed:11121117, PubMed:21990364, PubMed:30279168). Also blocks IL11 cluster signaling through IL11R (PubMed:26876177, PubMed:30279168).</text>
</comment>
<comment type="similarity">
    <text evidence="40">Belongs to the type I cytokine receptor family. Type 2 subfamily.</text>
</comment>
<protein>
    <recommendedName>
        <fullName evidence="40">Interleukin-6 receptor subunit beta</fullName>
        <shortName>IL-6 receptor subunit beta</shortName>
        <shortName>IL-6R subunit beta</shortName>
        <shortName>IL-6R-beta</shortName>
        <shortName>IL-6RB</shortName>
    </recommendedName>
    <alternativeName>
        <fullName>CDw130</fullName>
    </alternativeName>
    <alternativeName>
        <fullName>Interleukin-6 signal transducer</fullName>
    </alternativeName>
    <alternativeName>
        <fullName>Membrane glycoprotein 130</fullName>
        <shortName evidence="38">gp130</shortName>
    </alternativeName>
    <alternativeName>
        <fullName>Oncostatin-M receptor subunit alpha</fullName>
    </alternativeName>
    <cdAntigenName>CD130</cdAntigenName>
</protein>
<organism>
    <name type="scientific">Homo sapiens</name>
    <name type="common">Human</name>
    <dbReference type="NCBI Taxonomy" id="9606"/>
    <lineage>
        <taxon>Eukaryota</taxon>
        <taxon>Metazoa</taxon>
        <taxon>Chordata</taxon>
        <taxon>Craniata</taxon>
        <taxon>Vertebrata</taxon>
        <taxon>Euteleostomi</taxon>
        <taxon>Mammalia</taxon>
        <taxon>Eutheria</taxon>
        <taxon>Euarchontoglires</taxon>
        <taxon>Primates</taxon>
        <taxon>Haplorrhini</taxon>
        <taxon>Catarrhini</taxon>
        <taxon>Hominidae</taxon>
        <taxon>Homo</taxon>
    </lineage>
</organism>